<reference key="1">
    <citation type="journal article" date="2014" name="Genome Announc.">
        <title>Complete coding sequence of zika virus from a French polynesia outbreak in 2013.</title>
        <authorList>
            <person name="Baronti C."/>
            <person name="Piorkowski G."/>
            <person name="Charrel R.N."/>
            <person name="Boubis L."/>
            <person name="Leparc-Goffart I."/>
            <person name="de Lamballerie X."/>
        </authorList>
    </citation>
    <scope>NUCLEOTIDE SEQUENCE [LARGE SCALE GENOMIC DNA]</scope>
</reference>
<reference key="2">
    <citation type="journal article" date="2015" name="J. Virol.">
        <title>Biology of zika virus infection in human skin cells.</title>
        <authorList>
            <person name="Hamel R."/>
            <person name="Dejarnac O."/>
            <person name="Wichit S."/>
            <person name="Ekchariyawat P."/>
            <person name="Neyret A."/>
            <person name="Luplertlop N."/>
            <person name="Perera-Lecoin M."/>
            <person name="Surasombatpattana P."/>
            <person name="Talignani L."/>
            <person name="Thomas F."/>
            <person name="Cao-Lormeau V.M."/>
            <person name="Choumet V."/>
            <person name="Briant L."/>
            <person name="Despres P."/>
            <person name="Amara A."/>
            <person name="Yssel H."/>
            <person name="Misse D."/>
        </authorList>
    </citation>
    <scope>INTERACTION WITH HOST TYRO3 (ENVELOPE PROTEIN E)</scope>
    <scope>INTERACTION WITH HOST AXL (ENVELOPE PROTEIN E)</scope>
    <scope>INTERACTION WITH HOST DC SIGN (ENVELOPE PROTEIN E)</scope>
    <source>
        <strain>PF-25013-18</strain>
    </source>
</reference>
<reference key="3">
    <citation type="journal article" date="2016" name="Cell Stem Cell">
        <title>Zika virus NS4A and NS4B proteins deregulate Akt-mTOR signaling in human fetal neural stem cells to inhibit neurogenesis and induce autophagy.</title>
        <authorList>
            <person name="Liang Q."/>
            <person name="Luo Z."/>
            <person name="Zeng J."/>
            <person name="Chen W."/>
            <person name="Foo S.S."/>
            <person name="Lee S.A."/>
            <person name="Ge J."/>
            <person name="Wang S."/>
            <person name="Goldman S.A."/>
            <person name="Zlokovic B.V."/>
            <person name="Zhao Z."/>
            <person name="Jung J.U."/>
        </authorList>
    </citation>
    <scope>FUNCTION (NON-STRUCTURAL PROTEIN 4A)</scope>
    <scope>FUNCTION (NON-STRUCTURAL PROTEIN 4B)</scope>
</reference>
<reference key="4">
    <citation type="journal article" date="2017" name="Cell Rep.">
        <title>Functional analysis of glycosylation of a Zika Virus envelope protein.</title>
        <authorList>
            <person name="Fontes-Garfias C.R."/>
            <person name="Shan C."/>
            <person name="Luo H."/>
            <person name="Muruato A.E."/>
            <person name="Medeiros D.B.A."/>
            <person name="Mays E."/>
            <person name="Xie X."/>
            <person name="Zou J."/>
            <person name="Roundy C.M."/>
            <person name="Wakamiya M."/>
            <person name="Rossi S.L."/>
            <person name="Wang T."/>
            <person name="Weaver S.C."/>
            <person name="Shi P.Y."/>
        </authorList>
    </citation>
    <scope>GLYCOSYLATION AT ASN-444</scope>
    <scope>MUTAGENESIS OF ASN-444</scope>
</reference>
<reference key="5">
    <citation type="journal article" date="2017" name="J. Virol.">
        <title>Zika virus hijacks stress granule proteins and modulates the host stress response.</title>
        <authorList>
            <person name="Hou S."/>
            <person name="Kumar A."/>
            <person name="Xu Z."/>
            <person name="Airo A.M."/>
            <person name="Stryapunina I."/>
            <person name="Wong C.P."/>
            <person name="Branton W."/>
            <person name="Tchesnokov E."/>
            <person name="Goette M."/>
            <person name="Power C."/>
            <person name="Hobman T.C."/>
        </authorList>
    </citation>
    <scope>FUNCTION (SERINE PROTEASE NS3)</scope>
    <scope>FUNCTION (NON-STRUCTURAL PROTEIN 4A)</scope>
    <scope>FUNCTION (CAPSID PROTEIN)</scope>
    <scope>INTERACTION WITH HOST G3BP1 (CAPSID PROTEIN)</scope>
    <scope>INTERACTION WITH HOST CAPRIN1 (CAPSID PROTEIN)</scope>
    <source>
        <strain>ZIKV/Homo sapiens/THA/PLCal_ZV/2013</strain>
    </source>
</reference>
<reference key="6">
    <citation type="journal article" date="2018" name="Cell">
        <title>Comparative Flavivirus-Host Protein Interaction Mapping Reveals Mechanisms of Dengue and Zika Virus Pathogenesis.</title>
        <authorList>
            <person name="Shah P.S."/>
            <person name="Link N."/>
            <person name="Jang G.M."/>
            <person name="Sharp P.P."/>
            <person name="Zhu T."/>
            <person name="Swaney D.L."/>
            <person name="Johnson J.R."/>
            <person name="Von Dollen J."/>
            <person name="Ramage H.R."/>
            <person name="Satkamp L."/>
            <person name="Newton B."/>
            <person name="Huettenhain R."/>
            <person name="Petit M.J."/>
            <person name="Baum T."/>
            <person name="Everitt A."/>
            <person name="Laufman O."/>
            <person name="Tassetto M."/>
            <person name="Shales M."/>
            <person name="Stevenson E."/>
            <person name="Iglesias G.N."/>
            <person name="Shokat L."/>
            <person name="Tripathi S."/>
            <person name="Balasubramaniam V."/>
            <person name="Webb L.G."/>
            <person name="Aguirre S."/>
            <person name="Willsey A.J."/>
            <person name="Garcia-Sastre A."/>
            <person name="Pollard K.S."/>
            <person name="Cherry S."/>
            <person name="Gamarnik A.V."/>
            <person name="Marazzi I."/>
            <person name="Taunton J."/>
            <person name="Fernandez-Sesma A."/>
            <person name="Bellen H.J."/>
            <person name="Andino R."/>
            <person name="Krogan N.J."/>
        </authorList>
    </citation>
    <scope>FUNCTION (RNA-DIRECTED RNA POLYMERASE NS5)</scope>
    <scope>FUNCTION (NON-STRUCTURAL PROTEIN 4A)</scope>
    <scope>INTERACTION WITH HUMAN STAT2 (RNA-DIRECTED RNA POLYMERASE NS5)</scope>
    <scope>INTERACTION WITH HUMAN PAF1 COMPLEX (RNA-DIRECTED RNA POLYMERASE NS5)</scope>
    <scope>INTERACTION WITH HUMAN SRPRA (NON-STRUCTURAL PROTEIN 4A)</scope>
    <scope>INTERACTION WITH HUMAN SEC61G (NON-STRUCTURAL PROTEIN 4A)</scope>
    <scope>INTERACTION WITH HUMAN ANKLE2 (NON-STRUCTURAL PROTEIN 4A)</scope>
</reference>
<reference key="7">
    <citation type="journal article" date="2020" name="J. Virol.">
        <title>NS5 Sumoylation Directs Nuclear Responses that Permit Zika Virus to Persistently Infect Human Brain Microvascular Endothelial Cells.</title>
        <authorList>
            <person name="Conde J.N."/>
            <person name="Schutt W."/>
            <person name="Mladinich M."/>
            <person name="Sohn S.Y."/>
            <person name="Hearing P."/>
            <person name="Mackow E.R."/>
        </authorList>
    </citation>
    <scope>SUMOYLATION (RNA-DIRECTED RNA POLYMERASE NS5)</scope>
    <scope>REGION (RNA-DIRECTED RNA POLYMERASE NS5)</scope>
    <scope>SUBCELLULAR LOCATION (RNA-DIRECTED RNA POLYMERASE NS5)</scope>
    <scope>FUNCTION (RNA-DIRECTED RNA POLYMERASE NS5)</scope>
    <scope>MUTAGENESIS OF LYS-2772</scope>
</reference>
<reference evidence="39 40" key="8">
    <citation type="journal article" date="2022" name="Cell Biosci.">
        <title>TRIM22 suppresses Zika virus replication by targeting NS1 and NS3 for proteasomal degradation.</title>
        <authorList>
            <person name="Zu S."/>
            <person name="Li C."/>
            <person name="Li L."/>
            <person name="Deng Y.Q."/>
            <person name="Chen X."/>
            <person name="Luo D."/>
            <person name="Ye Q."/>
            <person name="Huang Y.J."/>
            <person name="Li X.F."/>
            <person name="Zhang R.R."/>
            <person name="Sun N."/>
            <person name="Zhang X."/>
            <person name="Aliyari S.R."/>
            <person name="Nielsen-Saines K."/>
            <person name="Jung J.U."/>
            <person name="Yang H."/>
            <person name="Qin C.F."/>
            <person name="Cheng G."/>
        </authorList>
    </citation>
    <scope>UBIQUITINATION (NON-STRUCTURAL PROTEIN 1)</scope>
    <scope>UBIQUITINATION (SERINE PROTEASE NS3)</scope>
</reference>
<reference key="9">
    <citation type="journal article" date="2022" name="EMBO Rep.">
        <title>Zika virus alters centrosome organization to suppress the innate immune response.</title>
        <authorList>
            <person name="Kodani A."/>
            <person name="Knopp K.A."/>
            <person name="Di Lullo E."/>
            <person name="Retallack H."/>
            <person name="Kriegstein A.R."/>
            <person name="DeRisi J.L."/>
            <person name="Reiter J.F."/>
        </authorList>
    </citation>
    <scope>FUNCTION (SERINE PROTEASE NS3)</scope>
    <scope>INTERACTION WITH HOST CEP63 (SERINE PROTEASE NS3)</scope>
</reference>
<reference key="10">
    <citation type="journal article" date="2023" name="J. Med. Virol.">
        <title>SERTAD3 induces proteasomal degradation of ZIKV capsid protein and represents a therapeutic target.</title>
        <authorList>
            <person name="Sun N."/>
            <person name="Zhang R.R."/>
            <person name="Song G.Y."/>
            <person name="Cai Q."/>
            <person name="Aliyari S.R."/>
            <person name="Nielsen-Saines K."/>
            <person name="Jung J.U."/>
            <person name="Yang H."/>
            <person name="Cheng G."/>
            <person name="Qin C.F."/>
        </authorList>
    </citation>
    <scope>SUBCELLULAR LOCATION (CAPSID PROTEIN C)</scope>
    <scope>INTERACTION WITH HOST SERTAD3 (CAPSID PROTEIN C)</scope>
</reference>
<reference evidence="39 40" key="11">
    <citation type="journal article" date="2017" name="Biochem. Biophys. Res. Commun.">
        <title>Structure of the NS5 methyltransferase from Zika virus and implications in inhibitor design.</title>
        <authorList>
            <person name="Zhang C."/>
            <person name="Feng T."/>
            <person name="Cheng J."/>
            <person name="Li Y."/>
            <person name="Yin X."/>
            <person name="Zeng W."/>
            <person name="Jin X."/>
            <person name="Li Y."/>
            <person name="Guo F."/>
            <person name="Jin T."/>
        </authorList>
    </citation>
    <scope>X-RAY CRYSTALLOGRAPHY (2.05 ANGSTROMS) OF 2524-2785 IN COMPLEX WITH GTP; S-ADENOSYL-L-METHIONINE</scope>
</reference>
<reference key="12">
    <citation type="journal article" date="2016" name="Cell">
        <title>Structural basis of Zika Virus-specific antibody protection.</title>
        <authorList>
            <person name="Zhao H."/>
            <person name="Fernandez E."/>
            <person name="Dowd K.A."/>
            <person name="Speer S.D."/>
            <person name="Platt D.J."/>
            <person name="Gorman M.J."/>
            <person name="Govero J."/>
            <person name="Nelson C.A."/>
            <person name="Pierson T.C."/>
            <person name="Diamond M.S."/>
            <person name="Fremont D.H."/>
        </authorList>
    </citation>
    <scope>X-RAY CRYSTALLOGRAPHY (1.70 ANGSTROMS) OF 589-697</scope>
</reference>
<reference key="13">
    <citation type="journal article" date="2016" name="Cell Rep.">
        <title>Structures of NS5 Methyltransferase from Zika Virus.</title>
        <authorList>
            <person name="Coloma J."/>
            <person name="Jain R."/>
            <person name="Rajashankar K.R."/>
            <person name="Garcia-Sastre A."/>
            <person name="Aggarwal A.K."/>
        </authorList>
    </citation>
    <scope>X-RAY CRYSTALLOGRAPHY (1.33 ANGSTROMS) OF 2521-2786 IN COMPLEX WITH S-ADENOSYL-L-METHIONINE</scope>
</reference>
<reference key="14">
    <citation type="journal article" date="2016" name="Nat. Commun.">
        <title>Neutralization mechanism of a highly potent antibody against Zika virus.</title>
        <authorList>
            <person name="Zhang S."/>
            <person name="Kostyuchenko V.A."/>
            <person name="Ng T.S."/>
            <person name="Lim X.N."/>
            <person name="Ooi J.S."/>
            <person name="Lambert S."/>
            <person name="Tan T.Y."/>
            <person name="Widman D.G."/>
            <person name="Shi J."/>
            <person name="Baric R.S."/>
            <person name="Lok S.M."/>
        </authorList>
    </citation>
    <scope>STRUCTURE BY ELECTRON MICROSCOPY (4.00 ANGSTROMS) OF 216-794</scope>
    <scope>GLYCOSYLATION AT ASN-444</scope>
</reference>
<reference key="15">
    <citation type="journal article" date="2016" name="Nature">
        <title>Structure of the thermally stable Zika virus.</title>
        <authorList>
            <person name="Kostyuchenko V.A."/>
            <person name="Lim E.X."/>
            <person name="Zhang S."/>
            <person name="Fibriansah G."/>
            <person name="Ng T.S."/>
            <person name="Ooi J.S."/>
            <person name="Shi J."/>
            <person name="Lok S.M."/>
        </authorList>
    </citation>
    <scope>STRUCTURE BY ELECTRON MICROSCOPY (3.70 ANGSTROMS) OF 216-794</scope>
    <scope>GLYCOSYLATION AT ASN-444</scope>
</reference>
<reference key="16">
    <citation type="journal article" date="2016" name="Nature">
        <title>Structural basis of potent Zika-dengue virus antibody cross-neutralization.</title>
        <authorList>
            <person name="Barba-Spaeth G."/>
            <person name="Dejnirattisai W."/>
            <person name="Rouvinski A."/>
            <person name="Vaney M.C."/>
            <person name="Medits I."/>
            <person name="Sharma A."/>
            <person name="Simon-Loriere E."/>
            <person name="Sakuntabhai A."/>
            <person name="Cao-Lormeau V.M."/>
            <person name="Haouz A."/>
            <person name="England P."/>
            <person name="Stiasny K."/>
            <person name="Mongkolsapaya J."/>
            <person name="Heinz F.X."/>
            <person name="Screaton G.R."/>
            <person name="Rey F.A."/>
        </authorList>
    </citation>
    <scope>X-RAY CRYSTALLOGRAPHY (2.20 ANGSTROMS) OF 291-698 IN COMPLEX WITH BETA-D-MANNOSE AND MANNOSE</scope>
    <scope>GLYCOSYLATION AT ASN-444</scope>
</reference>
<reference key="17">
    <citation type="journal article" date="2016" name="Protein Cell">
        <title>The crystal structure of Zika virus helicase: basis for antiviral drug design.</title>
        <authorList>
            <person name="Tian H."/>
            <person name="Ji X."/>
            <person name="Yang X."/>
            <person name="Xie W."/>
            <person name="Yang K."/>
            <person name="Chen C."/>
            <person name="Wu C."/>
            <person name="Chi H."/>
            <person name="Mu Z."/>
            <person name="Wang Z."/>
            <person name="Yang H."/>
        </authorList>
    </citation>
    <scope>X-RAY CRYSTALLOGRAPHY (1.80 ANGSTROMS) OF 1674-2119</scope>
</reference>
<reference key="18">
    <citation type="journal article" date="2016" name="Science">
        <title>The 3.8 A resolution cryo-EM structure of Zika virus.</title>
        <authorList>
            <person name="Sirohi D."/>
            <person name="Chen Z."/>
            <person name="Sun L."/>
            <person name="Klose T."/>
            <person name="Pierson T.C."/>
            <person name="Rossmann M.G."/>
            <person name="Kuhn R.J."/>
        </authorList>
    </citation>
    <scope>STRUCTURE BY ELECTRON MICROSCOPY (3.80 ANGSTROMS) OF 291-794 AND 216-290</scope>
</reference>
<reference key="19">
    <citation type="journal article" date="2017" name="Arch. Virol.">
        <title>Structural basis of Zika virus methyltransferase inhibition by sinefungin.</title>
        <authorList>
            <person name="Hercik K."/>
            <person name="Brynda J."/>
            <person name="Nencka R."/>
            <person name="Boura E."/>
        </authorList>
    </citation>
    <scope>X-RAY CRYSTALLOGRAPHY (1.90 ANGSTROMS) OF 2521-2784</scope>
</reference>
<reference key="20">
    <citation type="journal article" date="2017" name="J. Virol.">
        <title>Zika Virus methyltransferase: structure and functions for drug design perspectives.</title>
        <authorList>
            <person name="Coutard B."/>
            <person name="Barral K."/>
            <person name="Lichiere J."/>
            <person name="Selisko B."/>
            <person name="Martin B."/>
            <person name="Aouadi W."/>
            <person name="Lombardia M.O."/>
            <person name="Debart F."/>
            <person name="Vasseur J.J."/>
            <person name="Guillemot J.C."/>
            <person name="Canard B."/>
            <person name="Decroly E."/>
        </authorList>
    </citation>
    <scope>X-RAY CRYSTALLOGRAPHY (2.01 ANGSTROMS) OF 2525-2786 IN COMPLEX WITH S-ADENOSYL-L-METHIONINE</scope>
</reference>
<reference key="21">
    <citation type="journal article" date="2017" name="Nat. Commun.">
        <title>A human antibody against Zika virus crosslinks the E protein to prevent infection.</title>
        <authorList>
            <person name="Hasan S.S."/>
            <person name="Miller A."/>
            <person name="Sapparapu G."/>
            <person name="Fernandez E."/>
            <person name="Klose T."/>
            <person name="Long F."/>
            <person name="Fokine A."/>
            <person name="Porta J.C."/>
            <person name="Jiang W."/>
            <person name="Diamond M.S."/>
            <person name="Crowe J.E."/>
            <person name="Kuhn R.J."/>
            <person name="Rossmann M.G."/>
        </authorList>
    </citation>
    <scope>STRUCTURE BY ELECTRON MICROSCOPY (6.20 ANGSTROMS) OF 291-686</scope>
</reference>
<reference key="22">
    <citation type="journal article" date="2017" name="Nat. Struct. Mol. Biol.">
        <title>Structure of the immature Zika virus at 9 A resolution.</title>
        <authorList>
            <person name="Prasad V.M."/>
            <person name="Miller A.S."/>
            <person name="Klose T."/>
            <person name="Sirohi D."/>
            <person name="Buda G."/>
            <person name="Jiang W."/>
            <person name="Kuhn R.J."/>
            <person name="Rossmann M.G."/>
        </authorList>
    </citation>
    <scope>STRUCTURE BY ELECTRON MICROSCOPY (9.10 ANGSTROMS) OF 726-791 AND 238-290</scope>
</reference>
<reference key="23">
    <citation type="journal article" date="2017" name="Sci. Rep.">
        <title>Development of a S-adenosylmethionine analog that intrudes the RNA-cap binding site of Zika methyltransferase.</title>
        <authorList>
            <person name="Jain R."/>
            <person name="Butler K.V."/>
            <person name="Coloma J."/>
            <person name="Jin J."/>
            <person name="Aggarwal A.K."/>
        </authorList>
    </citation>
    <scope>X-RAY CRYSTALLOGRAPHY (1.55 ANGSTROMS) OF 2521-2788</scope>
</reference>
<reference evidence="41 42" key="24">
    <citation type="journal article" date="2018" name="Oncotarget">
        <title>The structure of the binary methyltransferase-SAH complex from Zika virus reveals a novel conformation for the mechanism of mRNA capping.</title>
        <authorList>
            <person name="Chatrin C."/>
            <person name="Talapatra S.K."/>
            <person name="Canard B."/>
            <person name="Kozielski F."/>
        </authorList>
    </citation>
    <scope>X-RAY CRYSTALLOGRAPHY (2.00 ANGSTROMS) OF 2524-2785</scope>
</reference>
<reference evidence="43" key="25">
    <citation type="journal article" date="2018" name="Structure">
        <title>Refinement and Analysis of the Mature Zika Virus Cryo-EM Structure at 3.1 A Resolution.</title>
        <authorList>
            <person name="Sevvana M."/>
            <person name="Long F."/>
            <person name="Miller A.S."/>
            <person name="Klose T."/>
            <person name="Buda G."/>
            <person name="Sun L."/>
            <person name="Kuhn R.J."/>
            <person name="Rossmann M.G."/>
        </authorList>
    </citation>
    <scope>STRUCTURE BY ELECTRON MICROSCOPY (3.10 ANGSTROMS) OF 291-794 AND 216-290</scope>
</reference>
<reference key="26">
    <citation type="journal article" date="2019" name="PLoS Pathog.">
        <title>Supramolecular arrangement of the full-length Zika virus NS5.</title>
        <authorList>
            <person name="Ferrero D.S."/>
            <person name="Ruiz-Arroyo V.M."/>
            <person name="Soler N."/>
            <person name="Uson I."/>
            <person name="Guarne A."/>
            <person name="Verdaguer N."/>
        </authorList>
    </citation>
    <scope>X-RAY CRYSTALLOGRAPHY (3.98 ANGSTROMS) OF 2521-3423</scope>
    <scope>SUBUNIT (RNA-DIRECTED RNA POLYMERASE NS5)</scope>
    <scope>FUNCTION (RNA-DIRECTED RNA POLYMERASE NS5)</scope>
    <scope>CATALYTIC ACTIVITY (RNA-DIRECTED RNA POLYMERASE NS5)</scope>
    <scope>MUTAGENESIS OF TYR-2545; LYS-2548 AND LYS-2549</scope>
</reference>
<reference key="27">
    <citation type="journal article" date="2024" name="Nat. Commun.">
        <title>Zika viruses encode 5' upstream open reading frames affecting infection of human brain cells.</title>
        <authorList>
            <person name="Lefevre C."/>
            <person name="Cook G.M."/>
            <person name="Dinan A.M."/>
            <person name="Torii S."/>
            <person name="Stewart H."/>
            <person name="Gibbons G."/>
            <person name="Nicholson A.S."/>
            <person name="Echavarria-Consuegra L."/>
            <person name="Meredith L.W."/>
            <person name="Lulla V."/>
            <person name="McGovern N."/>
            <person name="Kenyon J.C."/>
            <person name="Goodfellow I."/>
            <person name="Deane J.E."/>
            <person name="Graham S.C."/>
            <person name="Lakatos A."/>
            <person name="Lambrechts L."/>
            <person name="Brierley I."/>
            <person name="Irigoyen N."/>
        </authorList>
    </citation>
    <scope>ALTERNATIVE INITIATION (ISOFORM UROF1 AND UORF2)</scope>
    <source>
        <strain>Isolate PE243</strain>
    </source>
</reference>
<protein>
    <recommendedName>
        <fullName>Genome polyprotein</fullName>
    </recommendedName>
    <component>
        <recommendedName>
            <fullName evidence="8">Capsid protein C</fullName>
        </recommendedName>
        <alternativeName>
            <fullName>Capsid protein</fullName>
        </alternativeName>
        <alternativeName>
            <fullName>Core protein</fullName>
        </alternativeName>
    </component>
    <component>
        <recommendedName>
            <fullName evidence="8">Protein prM</fullName>
        </recommendedName>
        <alternativeName>
            <fullName>Precursor membrane protein</fullName>
        </alternativeName>
    </component>
    <component>
        <recommendedName>
            <fullName evidence="8">Peptide pr</fullName>
        </recommendedName>
        <alternativeName>
            <fullName>Peptide precursor</fullName>
        </alternativeName>
    </component>
    <component>
        <recommendedName>
            <fullName evidence="8">Small envelope protein M</fullName>
        </recommendedName>
        <alternativeName>
            <fullName>Matrix protein</fullName>
        </alternativeName>
    </component>
    <component>
        <recommendedName>
            <fullName evidence="8">Envelope protein E</fullName>
        </recommendedName>
    </component>
    <component>
        <recommendedName>
            <fullName evidence="8">Non-structural protein 1</fullName>
            <shortName>NS1</shortName>
        </recommendedName>
    </component>
    <component>
        <recommendedName>
            <fullName evidence="8">Non-structural protein 2A</fullName>
            <shortName>NS2A</shortName>
        </recommendedName>
    </component>
    <component>
        <recommendedName>
            <fullName evidence="8">Serine protease subunit NS2B</fullName>
        </recommendedName>
        <alternativeName>
            <fullName>Flavivirin protease NS2B regulatory subunit</fullName>
        </alternativeName>
        <alternativeName>
            <fullName>Non-structural protein 2B</fullName>
        </alternativeName>
    </component>
    <component>
        <recommendedName>
            <fullName evidence="8">Serine protease NS3</fullName>
            <ecNumber>3.4.21.91</ecNumber>
            <ecNumber>3.6.1.15</ecNumber>
            <ecNumber>3.6.4.13</ecNumber>
        </recommendedName>
        <alternativeName>
            <fullName>Flavivirin protease NS3 catalytic subunit</fullName>
        </alternativeName>
        <alternativeName>
            <fullName>Non-structural protein 3</fullName>
        </alternativeName>
    </component>
    <component>
        <recommendedName>
            <fullName evidence="8">Non-structural protein 4A</fullName>
            <shortName>NS4A</shortName>
        </recommendedName>
    </component>
    <component>
        <recommendedName>
            <fullName evidence="8">Peptide 2k</fullName>
        </recommendedName>
    </component>
    <component>
        <recommendedName>
            <fullName evidence="8">Non-structural protein 4B</fullName>
            <shortName>NS4B</shortName>
        </recommendedName>
    </component>
    <component>
        <recommendedName>
            <fullName evidence="37">RNA-directed RNA polymerase NS5</fullName>
            <ecNumber evidence="19">2.1.1.56</ecNumber>
            <ecNumber evidence="19">2.1.1.57</ecNumber>
            <ecNumber evidence="31">2.7.7.48</ecNumber>
        </recommendedName>
        <alternativeName>
            <fullName>NS5</fullName>
        </alternativeName>
    </component>
</protein>
<feature type="chain" id="PRO_0000443018" description="Genome polyprotein">
    <location>
        <begin position="1"/>
        <end position="3423"/>
    </location>
</feature>
<feature type="chain" id="PRO_0000443019" description="Capsid protein C">
    <location>
        <begin position="1"/>
        <end position="104"/>
    </location>
</feature>
<feature type="propeptide" id="PRO_0000443020" description="ER anchor for capsid protein C, removed in mature form by serine protease NS3">
    <location>
        <begin position="105"/>
        <end position="122"/>
    </location>
</feature>
<feature type="chain" id="PRO_0000443021" description="Protein prM">
    <location>
        <begin position="123"/>
        <end position="290"/>
    </location>
</feature>
<feature type="chain" id="PRO_0000443022" description="Peptide pr">
    <location>
        <begin position="123"/>
        <end position="215"/>
    </location>
</feature>
<feature type="chain" id="PRO_0000443023" description="Small envelope protein M">
    <location>
        <begin position="216"/>
        <end position="290"/>
    </location>
</feature>
<feature type="chain" id="PRO_0000443024" description="Envelope protein E">
    <location>
        <begin position="291"/>
        <end position="794"/>
    </location>
</feature>
<feature type="chain" id="PRO_0000443025" description="Non-structural protein 1">
    <location>
        <begin position="795"/>
        <end position="1146"/>
    </location>
</feature>
<feature type="chain" id="PRO_0000443026" description="Non-structural protein 2A">
    <location>
        <begin position="1147"/>
        <end position="1372"/>
    </location>
</feature>
<feature type="chain" id="PRO_0000443027" description="Serine protease subunit NS2B">
    <location>
        <begin position="1373"/>
        <end position="1502"/>
    </location>
</feature>
<feature type="chain" id="PRO_0000443028" description="Serine protease NS3">
    <location>
        <begin position="1503"/>
        <end position="2119"/>
    </location>
</feature>
<feature type="chain" id="PRO_0000443029" description="Non-structural protein 4A">
    <location>
        <begin position="2120"/>
        <end position="2246"/>
    </location>
</feature>
<feature type="peptide" id="PRO_0000443030" description="Peptide 2k">
    <location>
        <begin position="2247"/>
        <end position="2269"/>
    </location>
</feature>
<feature type="chain" id="PRO_0000443031" description="Non-structural protein 4B">
    <location>
        <begin position="2270"/>
        <end position="2520"/>
    </location>
</feature>
<feature type="chain" id="PRO_0000443032" description="RNA-directed RNA polymerase NS5">
    <location>
        <begin position="2521"/>
        <end position="3423"/>
    </location>
</feature>
<feature type="topological domain" description="Cytoplasmic" evidence="38">
    <location>
        <begin position="1"/>
        <end position="104"/>
    </location>
</feature>
<feature type="transmembrane region" description="Helical" evidence="13">
    <location>
        <begin position="105"/>
        <end position="125"/>
    </location>
</feature>
<feature type="topological domain" description="Extracellular" evidence="38">
    <location>
        <begin position="126"/>
        <end position="249"/>
    </location>
</feature>
<feature type="transmembrane region" description="Helical" evidence="13">
    <location>
        <begin position="250"/>
        <end position="269"/>
    </location>
</feature>
<feature type="topological domain" description="Cytoplasmic" evidence="38">
    <location>
        <begin position="270"/>
        <end position="274"/>
    </location>
</feature>
<feature type="transmembrane region" description="Helical" evidence="38">
    <location>
        <begin position="275"/>
        <end position="290"/>
    </location>
</feature>
<feature type="topological domain" description="Extracellular" evidence="38">
    <location>
        <begin position="291"/>
        <end position="745"/>
    </location>
</feature>
<feature type="transmembrane region" description="Helical" evidence="13">
    <location>
        <begin position="746"/>
        <end position="767"/>
    </location>
</feature>
<feature type="topological domain" description="Cytoplasmic" evidence="38">
    <location>
        <begin position="768"/>
        <end position="773"/>
    </location>
</feature>
<feature type="transmembrane region" description="Helical" evidence="13">
    <location>
        <begin position="774"/>
        <end position="794"/>
    </location>
</feature>
<feature type="topological domain" description="Lumenal" evidence="38">
    <location>
        <begin position="795"/>
        <end position="1177"/>
    </location>
</feature>
<feature type="transmembrane region" description="Helical" evidence="13">
    <location>
        <begin position="1178"/>
        <end position="1198"/>
    </location>
</feature>
<feature type="topological domain" description="Cytoplasmic" evidence="38">
    <location>
        <begin position="1199"/>
        <end position="1220"/>
    </location>
</feature>
<feature type="transmembrane region" description="Helical" evidence="13">
    <location>
        <begin position="1221"/>
        <end position="1241"/>
    </location>
</feature>
<feature type="topological domain" description="Lumenal" evidence="38">
    <location>
        <begin position="1242"/>
        <end position="1270"/>
    </location>
</feature>
<feature type="transmembrane region" description="Helical" evidence="13">
    <location>
        <begin position="1271"/>
        <end position="1291"/>
    </location>
</feature>
<feature type="topological domain" description="Cytoplasmic" evidence="38">
    <location>
        <begin position="1292"/>
        <end position="1295"/>
    </location>
</feature>
<feature type="transmembrane region" description="Helical" evidence="13">
    <location>
        <begin position="1296"/>
        <end position="1316"/>
    </location>
</feature>
<feature type="topological domain" description="Lumenal" evidence="38">
    <location>
        <begin position="1317"/>
        <end position="1345"/>
    </location>
</feature>
<feature type="transmembrane region" description="Helical" evidence="13">
    <location>
        <begin position="1346"/>
        <end position="1366"/>
    </location>
</feature>
<feature type="topological domain" description="Cytoplasmic" evidence="38">
    <location>
        <begin position="1367"/>
        <end position="1373"/>
    </location>
</feature>
<feature type="transmembrane region" description="Helical" evidence="13">
    <location>
        <begin position="1374"/>
        <end position="1394"/>
    </location>
</feature>
<feature type="topological domain" description="Lumenal" evidence="38">
    <location>
        <begin position="1395"/>
        <end position="1397"/>
    </location>
</feature>
<feature type="transmembrane region" description="Helical" evidence="13">
    <location>
        <begin position="1398"/>
        <end position="1418"/>
    </location>
</feature>
<feature type="topological domain" description="Cytoplasmic" evidence="38">
    <location>
        <begin position="1419"/>
        <end position="1472"/>
    </location>
</feature>
<feature type="intramembrane region" description="Helical" evidence="13">
    <location>
        <begin position="1473"/>
        <end position="1493"/>
    </location>
</feature>
<feature type="topological domain" description="Lumenal" evidence="38">
    <location>
        <begin position="1494"/>
        <end position="2170"/>
    </location>
</feature>
<feature type="transmembrane region" description="Helical" evidence="13">
    <location>
        <begin position="2171"/>
        <end position="2191"/>
    </location>
</feature>
<feature type="topological domain" description="Lumenal" evidence="38">
    <location>
        <begin position="2192"/>
        <end position="2195"/>
    </location>
</feature>
<feature type="intramembrane region" description="Helical" evidence="13">
    <location>
        <begin position="2196"/>
        <end position="2216"/>
    </location>
</feature>
<feature type="topological domain" description="Cytoplasmic" evidence="38">
    <location>
        <begin position="2217"/>
        <end position="2218"/>
    </location>
</feature>
<feature type="transmembrane region" description="Helical" evidence="13">
    <location>
        <begin position="2219"/>
        <end position="2239"/>
    </location>
</feature>
<feature type="topological domain" description="Lumenal" evidence="38">
    <location>
        <begin position="2240"/>
        <end position="2254"/>
    </location>
</feature>
<feature type="intramembrane region" description="Helical; Note=Signal for NS4B" evidence="38">
    <location>
        <begin position="2255"/>
        <end position="2269"/>
    </location>
</feature>
<feature type="topological domain" description="Lumenal" evidence="38">
    <location>
        <begin position="2270"/>
        <end position="2307"/>
    </location>
</feature>
<feature type="intramembrane region" description="Helical" evidence="13">
    <location>
        <begin position="2308"/>
        <end position="2328"/>
    </location>
</feature>
<feature type="topological domain" description="Lumenal" evidence="38">
    <location>
        <begin position="2329"/>
        <end position="2344"/>
    </location>
</feature>
<feature type="transmembrane region" description="Helical" evidence="13">
    <location>
        <begin position="2345"/>
        <end position="2365"/>
    </location>
</feature>
<feature type="topological domain" description="Cytoplasmic" evidence="38">
    <location>
        <begin position="2366"/>
        <end position="2375"/>
    </location>
</feature>
<feature type="transmembrane region" description="Helical" evidence="13">
    <location>
        <begin position="2376"/>
        <end position="2396"/>
    </location>
</feature>
<feature type="topological domain" description="Lumenal" evidence="38">
    <location>
        <begin position="2397"/>
        <end position="2441"/>
    </location>
</feature>
<feature type="transmembrane region" description="Helical" evidence="13">
    <location>
        <begin position="2442"/>
        <end position="2462"/>
    </location>
</feature>
<feature type="topological domain" description="Cytoplasmic" evidence="38">
    <location>
        <begin position="2463"/>
        <end position="3423"/>
    </location>
</feature>
<feature type="domain" description="Peptidase S7" evidence="18">
    <location>
        <begin position="1503"/>
        <end position="1680"/>
    </location>
</feature>
<feature type="domain" description="Helicase ATP-binding" evidence="15">
    <location>
        <begin position="1683"/>
        <end position="1839"/>
    </location>
</feature>
<feature type="domain" description="Helicase C-terminal" evidence="16">
    <location>
        <begin position="1834"/>
        <end position="2013"/>
    </location>
</feature>
<feature type="domain" description="mRNA cap 0-1 NS5-type MT" evidence="19">
    <location>
        <begin position="2521"/>
        <end position="2785"/>
    </location>
</feature>
<feature type="domain" description="RdRp catalytic" evidence="14">
    <location>
        <begin position="3049"/>
        <end position="3199"/>
    </location>
</feature>
<feature type="region of interest" description="Disordered" evidence="10">
    <location>
        <begin position="1"/>
        <end position="25"/>
    </location>
</feature>
<feature type="region of interest" description="Hydrophobic; homodimerization of capsid protein C" evidence="9">
    <location>
        <begin position="37"/>
        <end position="72"/>
    </location>
</feature>
<feature type="region of interest" description="Fusion peptide" evidence="6">
    <location>
        <begin position="388"/>
        <end position="401"/>
    </location>
</feature>
<feature type="region of interest" description="Interacts with and activates NS3 protease" evidence="17">
    <location>
        <begin position="1425"/>
        <end position="1464"/>
    </location>
</feature>
<feature type="region of interest" description="Disordered" evidence="10">
    <location>
        <begin position="1429"/>
        <end position="1451"/>
    </location>
</feature>
<feature type="region of interest" description="Important for RNA-binding" evidence="7">
    <location>
        <begin position="1687"/>
        <end position="1690"/>
    </location>
</feature>
<feature type="region of interest" description="SUMO-interacting motif (SIM)" evidence="32">
    <location>
        <begin position="2597"/>
        <end position="2600"/>
    </location>
</feature>
<feature type="short sequence motif" description="DEAH box" evidence="15">
    <location>
        <begin position="1787"/>
        <end position="1790"/>
    </location>
</feature>
<feature type="short sequence motif" description="Nuclear localization signal (NLS)" evidence="10">
    <location>
        <begin position="2908"/>
        <end position="2914"/>
    </location>
</feature>
<feature type="active site" description="Charge relay system; for serine protease NS3 activity" evidence="18">
    <location>
        <position position="1553"/>
    </location>
</feature>
<feature type="active site" description="Charge relay system; for serine protease NS3 activity" evidence="18">
    <location>
        <position position="1577"/>
    </location>
</feature>
<feature type="active site" description="Charge relay system; for serine protease NS3 activity" evidence="18">
    <location>
        <position position="1637"/>
    </location>
</feature>
<feature type="active site" description="For 2'-O-MTase activity" evidence="11">
    <location>
        <position position="2581"/>
    </location>
</feature>
<feature type="active site" description="For 2'-O-MTase activity" evidence="11">
    <location>
        <position position="2666"/>
    </location>
</feature>
<feature type="active site" description="For 2'-O-MTase activity" evidence="11">
    <location>
        <position position="2702"/>
    </location>
</feature>
<feature type="active site" description="For 2'-O-MTase activity" evidence="11">
    <location>
        <position position="2738"/>
    </location>
</feature>
<feature type="binding site" evidence="15">
    <location>
        <begin position="1696"/>
        <end position="1703"/>
    </location>
    <ligand>
        <name>ATP</name>
        <dbReference type="ChEBI" id="CHEBI:30616"/>
    </ligand>
</feature>
<feature type="binding site" evidence="25">
    <location>
        <begin position="2533"/>
        <end position="2539"/>
    </location>
    <ligand>
        <name>GTP</name>
        <dbReference type="ChEBI" id="CHEBI:37565"/>
    </ligand>
</feature>
<feature type="binding site" evidence="19 25">
    <location>
        <position position="2576"/>
    </location>
    <ligand>
        <name>S-adenosyl-L-methionine</name>
        <dbReference type="ChEBI" id="CHEBI:59789"/>
    </ligand>
</feature>
<feature type="binding site" evidence="19 24 25 27">
    <location>
        <position position="2606"/>
    </location>
    <ligand>
        <name>S-adenosyl-L-methionine</name>
        <dbReference type="ChEBI" id="CHEBI:59789"/>
    </ligand>
</feature>
<feature type="binding site" evidence="19 24 25 27">
    <location>
        <position position="2607"/>
    </location>
    <ligand>
        <name>S-adenosyl-L-methionine</name>
        <dbReference type="ChEBI" id="CHEBI:59789"/>
    </ligand>
</feature>
<feature type="binding site" evidence="19 25">
    <location>
        <position position="2624"/>
    </location>
    <ligand>
        <name>S-adenosyl-L-methionine</name>
        <dbReference type="ChEBI" id="CHEBI:59789"/>
    </ligand>
</feature>
<feature type="binding site" evidence="19 24 25 27">
    <location>
        <position position="2625"/>
    </location>
    <ligand>
        <name>S-adenosyl-L-methionine</name>
        <dbReference type="ChEBI" id="CHEBI:59789"/>
    </ligand>
</feature>
<feature type="binding site" evidence="24 25 27">
    <location>
        <position position="2630"/>
    </location>
    <ligand>
        <name>S-adenosyl-L-methionine</name>
        <dbReference type="ChEBI" id="CHEBI:59789"/>
    </ligand>
</feature>
<feature type="binding site" evidence="24 25 27">
    <location>
        <position position="2631"/>
    </location>
    <ligand>
        <name>S-adenosyl-L-methionine</name>
        <dbReference type="ChEBI" id="CHEBI:59789"/>
    </ligand>
</feature>
<feature type="binding site" evidence="19 24 25 27">
    <location>
        <position position="2651"/>
    </location>
    <ligand>
        <name>S-adenosyl-L-methionine</name>
        <dbReference type="ChEBI" id="CHEBI:59789"/>
    </ligand>
</feature>
<feature type="binding site" evidence="19 24 25 27">
    <location>
        <position position="2652"/>
    </location>
    <ligand>
        <name>S-adenosyl-L-methionine</name>
        <dbReference type="ChEBI" id="CHEBI:59789"/>
    </ligand>
</feature>
<feature type="binding site" evidence="24 25 27">
    <location>
        <position position="2666"/>
    </location>
    <ligand>
        <name>S-adenosyl-L-methionine</name>
        <dbReference type="ChEBI" id="CHEBI:59789"/>
    </ligand>
</feature>
<feature type="binding site" evidence="19">
    <location>
        <position position="2667"/>
    </location>
    <ligand>
        <name>S-adenosyl-L-methionine</name>
        <dbReference type="ChEBI" id="CHEBI:59789"/>
    </ligand>
</feature>
<feature type="binding site" evidence="25">
    <location>
        <begin position="2669"/>
        <end position="2675"/>
    </location>
    <ligand>
        <name>GTP</name>
        <dbReference type="ChEBI" id="CHEBI:37565"/>
    </ligand>
</feature>
<feature type="binding site" evidence="25">
    <location>
        <begin position="2733"/>
        <end position="2735"/>
    </location>
    <ligand>
        <name>GTP</name>
        <dbReference type="ChEBI" id="CHEBI:37565"/>
    </ligand>
</feature>
<feature type="binding site" evidence="19">
    <location>
        <position position="2740"/>
    </location>
    <ligand>
        <name>S-adenosyl-L-methionine</name>
        <dbReference type="ChEBI" id="CHEBI:59789"/>
    </ligand>
</feature>
<feature type="binding site" evidence="10">
    <location>
        <position position="2959"/>
    </location>
    <ligand>
        <name>Zn(2+)</name>
        <dbReference type="ChEBI" id="CHEBI:29105"/>
        <label>1</label>
    </ligand>
</feature>
<feature type="binding site" evidence="10">
    <location>
        <position position="2963"/>
    </location>
    <ligand>
        <name>Zn(2+)</name>
        <dbReference type="ChEBI" id="CHEBI:29105"/>
        <label>1</label>
    </ligand>
</feature>
<feature type="binding site" evidence="10">
    <location>
        <position position="2968"/>
    </location>
    <ligand>
        <name>Zn(2+)</name>
        <dbReference type="ChEBI" id="CHEBI:29105"/>
        <label>1</label>
    </ligand>
</feature>
<feature type="binding site" evidence="10">
    <location>
        <position position="2971"/>
    </location>
    <ligand>
        <name>Zn(2+)</name>
        <dbReference type="ChEBI" id="CHEBI:29105"/>
        <label>1</label>
    </ligand>
</feature>
<feature type="binding site" evidence="10">
    <location>
        <position position="3234"/>
    </location>
    <ligand>
        <name>Zn(2+)</name>
        <dbReference type="ChEBI" id="CHEBI:29105"/>
        <label>2</label>
    </ligand>
</feature>
<feature type="binding site" evidence="10">
    <location>
        <position position="3250"/>
    </location>
    <ligand>
        <name>Zn(2+)</name>
        <dbReference type="ChEBI" id="CHEBI:29105"/>
        <label>2</label>
    </ligand>
</feature>
<feature type="binding site" evidence="5">
    <location>
        <position position="3369"/>
    </location>
    <ligand>
        <name>Zn(2+)</name>
        <dbReference type="ChEBI" id="CHEBI:29105"/>
        <label>2</label>
    </ligand>
</feature>
<feature type="site" description="Cleavage; by viral protease NS3" evidence="10">
    <location>
        <begin position="104"/>
        <end position="105"/>
    </location>
</feature>
<feature type="site" description="Cleavage; by host signal peptidase" evidence="10">
    <location>
        <begin position="122"/>
        <end position="123"/>
    </location>
</feature>
<feature type="site" description="Fetal microcephaly">
    <location>
        <position position="139"/>
    </location>
</feature>
<feature type="site" description="Cleavage; by host furin" evidence="10">
    <location>
        <begin position="215"/>
        <end position="216"/>
    </location>
</feature>
<feature type="site" description="Cleavage; by host signal peptidase" evidence="3">
    <location>
        <begin position="290"/>
        <end position="291"/>
    </location>
</feature>
<feature type="site" description="Cleavage; by host signal peptidase" evidence="3">
    <location>
        <begin position="794"/>
        <end position="795"/>
    </location>
</feature>
<feature type="site" description="Cleavage; by host" evidence="3">
    <location>
        <begin position="1146"/>
        <end position="1147"/>
    </location>
</feature>
<feature type="site" description="Cleavage; by viral protease NS3" evidence="3">
    <location>
        <begin position="1372"/>
        <end position="1373"/>
    </location>
</feature>
<feature type="site" description="Cleavage; by autolysis" evidence="3">
    <location>
        <begin position="1502"/>
        <end position="1503"/>
    </location>
</feature>
<feature type="site" description="Involved in NS3 ATPase and RTPase activities" evidence="5">
    <location>
        <position position="1958"/>
    </location>
</feature>
<feature type="site" description="Involved in NS3 ATPase and RTPase activities" evidence="5">
    <location>
        <position position="1961"/>
    </location>
</feature>
<feature type="site" description="Cleavage; by autolysis" evidence="3">
    <location>
        <begin position="2119"/>
        <end position="2120"/>
    </location>
</feature>
<feature type="site" description="Cleavage; by viral protease NS3" evidence="3">
    <location>
        <begin position="2246"/>
        <end position="2247"/>
    </location>
</feature>
<feature type="site" description="Cleavage; by host signal peptidase" evidence="3">
    <location>
        <begin position="2269"/>
        <end position="2270"/>
    </location>
</feature>
<feature type="site" description="Cleavage; by viral protease NS3" evidence="3">
    <location>
        <begin position="2520"/>
        <end position="2521"/>
    </location>
</feature>
<feature type="site" description="mRNA cap binding" evidence="19">
    <location>
        <position position="2533"/>
    </location>
</feature>
<feature type="site" description="mRNA cap binding; via carbonyl oxygen" evidence="19">
    <location>
        <position position="2536"/>
    </location>
</feature>
<feature type="site" description="mRNA cap binding" evidence="19">
    <location>
        <position position="2537"/>
    </location>
</feature>
<feature type="site" description="mRNA cap binding; via carbonyl oxygen" evidence="19">
    <location>
        <position position="2539"/>
    </location>
</feature>
<feature type="site" description="mRNA cap binding" evidence="19">
    <location>
        <position position="2544"/>
    </location>
</feature>
<feature type="site" description="mRNA cap binding" evidence="19">
    <location>
        <position position="2548"/>
    </location>
</feature>
<feature type="site" description="Essential for 2'-O-methyltransferase activity" evidence="19">
    <location>
        <position position="2581"/>
    </location>
</feature>
<feature type="site" description="Essential for 2'-O-methyltransferase and N-7 methyltransferase activity" evidence="19">
    <location>
        <position position="2666"/>
    </location>
</feature>
<feature type="site" description="mRNA cap binding" evidence="19">
    <location>
        <position position="2670"/>
    </location>
</feature>
<feature type="site" description="Essential for 2'-O-methyltransferase activity" evidence="19">
    <location>
        <position position="2702"/>
    </location>
</feature>
<feature type="site" description="mRNA cap binding" evidence="19">
    <location>
        <position position="2733"/>
    </location>
</feature>
<feature type="site" description="mRNA cap binding" evidence="19">
    <location>
        <position position="2735"/>
    </location>
</feature>
<feature type="site" description="Essential for 2'-O-methyltransferase activity" evidence="19">
    <location>
        <position position="2738"/>
    </location>
</feature>
<feature type="modified residue" description="N6-acetyllysine; by host" evidence="10">
    <location>
        <position position="1891"/>
    </location>
</feature>
<feature type="modified residue" description="Phosphoserine" evidence="2">
    <location>
        <position position="2576"/>
    </location>
</feature>
<feature type="glycosylation site" description="N-linked (GlcNAc...) asparagine; by host" evidence="13">
    <location>
        <position position="192"/>
    </location>
</feature>
<feature type="glycosylation site" description="N-linked (GlcNAc...) asparagine; by host" evidence="21 22 26 29">
    <location>
        <position position="444"/>
    </location>
</feature>
<feature type="glycosylation site" description="N-linked (GlcNAc...) asparagine; by host" evidence="10">
    <location>
        <position position="924"/>
    </location>
</feature>
<feature type="glycosylation site" description="N-linked (GlcNAc...) asparagine; by host" evidence="10">
    <location>
        <position position="1001"/>
    </location>
</feature>
<feature type="disulfide bond" evidence="8">
    <location>
        <begin position="350"/>
        <end position="406"/>
    </location>
</feature>
<feature type="disulfide bond" evidence="8">
    <location>
        <begin position="382"/>
        <end position="411"/>
    </location>
</feature>
<feature type="disulfide bond" evidence="8">
    <location>
        <begin position="480"/>
        <end position="581"/>
    </location>
</feature>
<feature type="disulfide bond" evidence="8">
    <location>
        <begin position="598"/>
        <end position="629"/>
    </location>
</feature>
<feature type="disulfide bond" evidence="12">
    <location>
        <begin position="798"/>
        <end position="809"/>
    </location>
</feature>
<feature type="disulfide bond" evidence="12">
    <location>
        <begin position="849"/>
        <end position="937"/>
    </location>
</feature>
<feature type="disulfide bond" evidence="12">
    <location>
        <begin position="973"/>
        <end position="1017"/>
    </location>
</feature>
<feature type="disulfide bond" evidence="12">
    <location>
        <begin position="1074"/>
        <end position="1123"/>
    </location>
</feature>
<feature type="disulfide bond" evidence="12">
    <location>
        <begin position="1085"/>
        <end position="1106"/>
    </location>
</feature>
<feature type="disulfide bond" evidence="12">
    <location>
        <begin position="1107"/>
        <end position="1110"/>
    </location>
</feature>
<feature type="cross-link" description="Glycyl lysine isopeptide (Lys-Gly) (interchain with G-Cter in ubiquitin)" evidence="1">
    <location>
        <position position="328"/>
    </location>
</feature>
<feature type="cross-link" description="Glycyl lysine isopeptide (Lys-Gly) (interchain with G-Cter in ubiquitin)" evidence="1">
    <location>
        <position position="571"/>
    </location>
</feature>
<feature type="mutagenesis site" description="Improves attachment, assembly and infectivity in cell culture. Attenuates the virus in mouse and mosquitoes." evidence="29">
    <original>N</original>
    <variation>Q</variation>
    <location>
        <position position="444"/>
    </location>
</feature>
<feature type="mutagenesis site" description="Complete loss of dimer formation and about three times increased polymerase activity; when associated with S-2548 and A-2549." evidence="31">
    <original>Y</original>
    <variation>A</variation>
    <location>
        <position position="2545"/>
    </location>
</feature>
<feature type="mutagenesis site" description="Complete loss of dimer formation and about three times increased polymerase activity; when associated with A-2545 and A-2549." evidence="31">
    <original>K</original>
    <variation>S</variation>
    <location>
        <position position="2548"/>
    </location>
</feature>
<feature type="mutagenesis site" description="Complete loss of dimer formation and about three times increased polymerase activity; when associated with A-2545 and S-2548." evidence="31">
    <original>K</original>
    <variation>A</variation>
    <location>
        <position position="2549"/>
    </location>
</feature>
<feature type="mutagenesis site" description="Loss of sumoylation and more than 80% loss of binding to host STAT2." evidence="32">
    <original>K</original>
    <variation>R</variation>
    <location>
        <position position="2772"/>
    </location>
</feature>
<feature type="helix" evidence="53">
    <location>
        <begin position="222"/>
        <end position="225"/>
    </location>
</feature>
<feature type="strand" evidence="53">
    <location>
        <begin position="234"/>
        <end position="236"/>
    </location>
</feature>
<feature type="turn" evidence="53">
    <location>
        <begin position="237"/>
        <end position="241"/>
    </location>
</feature>
<feature type="helix" evidence="53">
    <location>
        <begin position="243"/>
        <end position="253"/>
    </location>
</feature>
<feature type="helix" evidence="53">
    <location>
        <begin position="257"/>
        <end position="264"/>
    </location>
</feature>
<feature type="turn" evidence="53">
    <location>
        <begin position="265"/>
        <end position="267"/>
    </location>
</feature>
<feature type="strand" evidence="53">
    <location>
        <begin position="271"/>
        <end position="273"/>
    </location>
</feature>
<feature type="helix" evidence="53">
    <location>
        <begin position="274"/>
        <end position="285"/>
    </location>
</feature>
<feature type="turn" evidence="59">
    <location>
        <begin position="292"/>
        <end position="295"/>
    </location>
</feature>
<feature type="strand" evidence="59">
    <location>
        <begin position="297"/>
        <end position="303"/>
    </location>
</feature>
<feature type="strand" evidence="49">
    <location>
        <begin position="305"/>
        <end position="307"/>
    </location>
</feature>
<feature type="strand" evidence="59">
    <location>
        <begin position="309"/>
        <end position="316"/>
    </location>
</feature>
<feature type="strand" evidence="59">
    <location>
        <begin position="320"/>
        <end position="324"/>
    </location>
</feature>
<feature type="strand" evidence="64">
    <location>
        <begin position="326"/>
        <end position="328"/>
    </location>
</feature>
<feature type="strand" evidence="59">
    <location>
        <begin position="331"/>
        <end position="340"/>
    </location>
</feature>
<feature type="strand" evidence="59">
    <location>
        <begin position="344"/>
        <end position="362"/>
    </location>
</feature>
<feature type="helix" evidence="59">
    <location>
        <begin position="373"/>
        <end position="376"/>
    </location>
</feature>
<feature type="strand" evidence="59">
    <location>
        <begin position="380"/>
        <end position="389"/>
    </location>
</feature>
<feature type="helix" evidence="59">
    <location>
        <begin position="391"/>
        <end position="393"/>
    </location>
</feature>
<feature type="strand" evidence="59">
    <location>
        <begin position="399"/>
        <end position="419"/>
    </location>
</feature>
<feature type="helix" evidence="59">
    <location>
        <begin position="422"/>
        <end position="424"/>
    </location>
</feature>
<feature type="strand" evidence="59">
    <location>
        <begin position="425"/>
        <end position="433"/>
    </location>
</feature>
<feature type="strand" evidence="63">
    <location>
        <begin position="436"/>
        <end position="438"/>
    </location>
</feature>
<feature type="helix" evidence="49">
    <location>
        <begin position="439"/>
        <end position="441"/>
    </location>
</feature>
<feature type="strand" evidence="63">
    <location>
        <begin position="444"/>
        <end position="447"/>
    </location>
</feature>
<feature type="turn" evidence="50">
    <location>
        <begin position="448"/>
        <end position="450"/>
    </location>
</feature>
<feature type="strand" evidence="59">
    <location>
        <begin position="453"/>
        <end position="460"/>
    </location>
</feature>
<feature type="strand" evidence="48">
    <location>
        <begin position="461"/>
        <end position="463"/>
    </location>
</feature>
<feature type="strand" evidence="59">
    <location>
        <begin position="465"/>
        <end position="469"/>
    </location>
</feature>
<feature type="helix" evidence="59">
    <location>
        <begin position="471"/>
        <end position="473"/>
    </location>
</feature>
<feature type="strand" evidence="59">
    <location>
        <begin position="474"/>
        <end position="480"/>
    </location>
</feature>
<feature type="strand" evidence="59">
    <location>
        <begin position="482"/>
        <end position="486"/>
    </location>
</feature>
<feature type="turn" evidence="65">
    <location>
        <begin position="487"/>
        <end position="489"/>
    </location>
</feature>
<feature type="strand" evidence="59">
    <location>
        <begin position="490"/>
        <end position="496"/>
    </location>
</feature>
<feature type="strand" evidence="59">
    <location>
        <begin position="499"/>
        <end position="504"/>
    </location>
</feature>
<feature type="helix" evidence="59">
    <location>
        <begin position="505"/>
        <end position="509"/>
    </location>
</feature>
<feature type="strand" evidence="59">
    <location>
        <begin position="515"/>
        <end position="517"/>
    </location>
</feature>
<feature type="strand" evidence="62">
    <location>
        <begin position="518"/>
        <end position="520"/>
    </location>
</feature>
<feature type="strand" evidence="64">
    <location>
        <begin position="521"/>
        <end position="523"/>
    </location>
</feature>
<feature type="helix" evidence="59">
    <location>
        <begin position="529"/>
        <end position="532"/>
    </location>
</feature>
<feature type="strand" evidence="59">
    <location>
        <begin position="533"/>
        <end position="538"/>
    </location>
</feature>
<feature type="turn" evidence="59">
    <location>
        <begin position="539"/>
        <end position="541"/>
    </location>
</feature>
<feature type="strand" evidence="59">
    <location>
        <begin position="542"/>
        <end position="547"/>
    </location>
</feature>
<feature type="helix" evidence="59">
    <location>
        <begin position="552"/>
        <end position="558"/>
    </location>
</feature>
<feature type="turn" evidence="59">
    <location>
        <begin position="559"/>
        <end position="561"/>
    </location>
</feature>
<feature type="strand" evidence="59">
    <location>
        <begin position="562"/>
        <end position="568"/>
    </location>
</feature>
<feature type="strand" evidence="59">
    <location>
        <begin position="571"/>
        <end position="575"/>
    </location>
</feature>
<feature type="strand" evidence="59">
    <location>
        <begin position="578"/>
        <end position="584"/>
    </location>
</feature>
<feature type="helix" evidence="48">
    <location>
        <begin position="585"/>
        <end position="587"/>
    </location>
</feature>
<feature type="turn" evidence="59">
    <location>
        <begin position="591"/>
        <end position="594"/>
    </location>
</feature>
<feature type="strand" evidence="47">
    <location>
        <begin position="602"/>
        <end position="606"/>
    </location>
</feature>
<feature type="strand" evidence="53">
    <location>
        <begin position="612"/>
        <end position="614"/>
    </location>
</feature>
<feature type="strand" evidence="47">
    <location>
        <begin position="616"/>
        <end position="622"/>
    </location>
</feature>
<feature type="strand" evidence="47">
    <location>
        <begin position="628"/>
        <end position="630"/>
    </location>
</feature>
<feature type="strand" evidence="47">
    <location>
        <begin position="633"/>
        <end position="637"/>
    </location>
</feature>
<feature type="turn" evidence="47">
    <location>
        <begin position="639"/>
        <end position="641"/>
    </location>
</feature>
<feature type="strand" evidence="47">
    <location>
        <begin position="644"/>
        <end position="648"/>
    </location>
</feature>
<feature type="strand" evidence="47">
    <location>
        <begin position="650"/>
        <end position="652"/>
    </location>
</feature>
<feature type="turn" evidence="57">
    <location>
        <begin position="657"/>
        <end position="661"/>
    </location>
</feature>
<feature type="strand" evidence="47">
    <location>
        <begin position="662"/>
        <end position="669"/>
    </location>
</feature>
<feature type="strand" evidence="47">
    <location>
        <begin position="672"/>
        <end position="682"/>
    </location>
</feature>
<feature type="strand" evidence="47">
    <location>
        <begin position="686"/>
        <end position="692"/>
    </location>
</feature>
<feature type="helix" evidence="53">
    <location>
        <begin position="696"/>
        <end position="714"/>
    </location>
</feature>
<feature type="helix" evidence="53">
    <location>
        <begin position="717"/>
        <end position="720"/>
    </location>
</feature>
<feature type="strand" evidence="53">
    <location>
        <begin position="721"/>
        <end position="723"/>
    </location>
</feature>
<feature type="helix" evidence="53">
    <location>
        <begin position="731"/>
        <end position="744"/>
    </location>
</feature>
<feature type="turn" evidence="53">
    <location>
        <begin position="745"/>
        <end position="747"/>
    </location>
</feature>
<feature type="helix" evidence="53">
    <location>
        <begin position="752"/>
        <end position="767"/>
    </location>
</feature>
<feature type="turn" evidence="53">
    <location>
        <begin position="776"/>
        <end position="778"/>
    </location>
</feature>
<feature type="helix" evidence="53">
    <location>
        <begin position="779"/>
        <end position="789"/>
    </location>
</feature>
<feature type="strand" evidence="60">
    <location>
        <begin position="1068"/>
        <end position="1072"/>
    </location>
</feature>
<feature type="strand" evidence="60">
    <location>
        <begin position="1078"/>
        <end position="1081"/>
    </location>
</feature>
<feature type="strand" evidence="60">
    <location>
        <begin position="1093"/>
        <end position="1095"/>
    </location>
</feature>
<feature type="strand" evidence="60">
    <location>
        <begin position="1104"/>
        <end position="1109"/>
    </location>
</feature>
<feature type="strand" evidence="60">
    <location>
        <begin position="1115"/>
        <end position="1119"/>
    </location>
</feature>
<feature type="strand" evidence="60">
    <location>
        <begin position="1122"/>
        <end position="1125"/>
    </location>
</feature>
<feature type="strand" evidence="61">
    <location>
        <begin position="1422"/>
        <end position="1429"/>
    </location>
</feature>
<feature type="strand" evidence="61">
    <location>
        <begin position="1522"/>
        <end position="1531"/>
    </location>
</feature>
<feature type="strand" evidence="61">
    <location>
        <begin position="1534"/>
        <end position="1544"/>
    </location>
</feature>
<feature type="strand" evidence="61">
    <location>
        <begin position="1547"/>
        <end position="1550"/>
    </location>
</feature>
<feature type="helix" evidence="61">
    <location>
        <begin position="1552"/>
        <end position="1555"/>
    </location>
</feature>
<feature type="strand" evidence="61">
    <location>
        <begin position="1560"/>
        <end position="1562"/>
    </location>
</feature>
<feature type="strand" evidence="61">
    <location>
        <begin position="1565"/>
        <end position="1567"/>
    </location>
</feature>
<feature type="strand" evidence="61">
    <location>
        <begin position="1569"/>
        <end position="1573"/>
    </location>
</feature>
<feature type="turn" evidence="61">
    <location>
        <begin position="1574"/>
        <end position="1577"/>
    </location>
</feature>
<feature type="strand" evidence="61">
    <location>
        <begin position="1578"/>
        <end position="1584"/>
    </location>
</feature>
<feature type="strand" evidence="61">
    <location>
        <begin position="1593"/>
        <end position="1595"/>
    </location>
</feature>
<feature type="strand" evidence="61">
    <location>
        <begin position="1597"/>
        <end position="1601"/>
    </location>
</feature>
<feature type="strand" evidence="61">
    <location>
        <begin position="1609"/>
        <end position="1613"/>
    </location>
</feature>
<feature type="strand" evidence="61">
    <location>
        <begin position="1616"/>
        <end position="1620"/>
    </location>
</feature>
<feature type="strand" evidence="61">
    <location>
        <begin position="1623"/>
        <end position="1627"/>
    </location>
</feature>
<feature type="helix" evidence="61">
    <location>
        <begin position="1634"/>
        <end position="1636"/>
    </location>
</feature>
<feature type="strand" evidence="61">
    <location>
        <begin position="1640"/>
        <end position="1642"/>
    </location>
</feature>
<feature type="strand" evidence="61">
    <location>
        <begin position="1648"/>
        <end position="1651"/>
    </location>
</feature>
<feature type="turn" evidence="61">
    <location>
        <begin position="1652"/>
        <end position="1654"/>
    </location>
</feature>
<feature type="strand" evidence="45">
    <location>
        <begin position="1678"/>
        <end position="1680"/>
    </location>
</feature>
<feature type="helix" evidence="52">
    <location>
        <begin position="1685"/>
        <end position="1687"/>
    </location>
</feature>
<feature type="strand" evidence="58">
    <location>
        <begin position="1691"/>
        <end position="1694"/>
    </location>
</feature>
<feature type="turn" evidence="58">
    <location>
        <begin position="1702"/>
        <end position="1705"/>
    </location>
</feature>
<feature type="helix" evidence="58">
    <location>
        <begin position="1706"/>
        <end position="1717"/>
    </location>
</feature>
<feature type="strand" evidence="58">
    <location>
        <begin position="1721"/>
        <end position="1727"/>
    </location>
</feature>
<feature type="helix" evidence="58">
    <location>
        <begin position="1728"/>
        <end position="1737"/>
    </location>
</feature>
<feature type="turn" evidence="58">
    <location>
        <begin position="1738"/>
        <end position="1740"/>
    </location>
</feature>
<feature type="strand" evidence="58">
    <location>
        <begin position="1743"/>
        <end position="1745"/>
    </location>
</feature>
<feature type="strand" evidence="58">
    <location>
        <begin position="1760"/>
        <end position="1764"/>
    </location>
</feature>
<feature type="helix" evidence="58">
    <location>
        <begin position="1765"/>
        <end position="1773"/>
    </location>
</feature>
<feature type="strand" evidence="58">
    <location>
        <begin position="1774"/>
        <end position="1776"/>
    </location>
</feature>
<feature type="strand" evidence="58">
    <location>
        <begin position="1782"/>
        <end position="1787"/>
    </location>
</feature>
<feature type="turn" evidence="58">
    <location>
        <begin position="1788"/>
        <end position="1790"/>
    </location>
</feature>
<feature type="helix" evidence="58">
    <location>
        <begin position="1794"/>
        <end position="1808"/>
    </location>
</feature>
<feature type="strand" evidence="58">
    <location>
        <begin position="1813"/>
        <end position="1817"/>
    </location>
</feature>
<feature type="strand" evidence="58">
    <location>
        <begin position="1835"/>
        <end position="1839"/>
    </location>
</feature>
<feature type="strand" evidence="58">
    <location>
        <begin position="1848"/>
        <end position="1850"/>
    </location>
</feature>
<feature type="helix" evidence="58">
    <location>
        <begin position="1852"/>
        <end position="1855"/>
    </location>
</feature>
<feature type="strand" evidence="58">
    <location>
        <begin position="1861"/>
        <end position="1864"/>
    </location>
</feature>
<feature type="helix" evidence="58">
    <location>
        <begin position="1868"/>
        <end position="1880"/>
    </location>
</feature>
<feature type="strand" evidence="58">
    <location>
        <begin position="1885"/>
        <end position="1888"/>
    </location>
</feature>
<feature type="turn" evidence="58">
    <location>
        <begin position="1890"/>
        <end position="1892"/>
    </location>
</feature>
<feature type="helix" evidence="58">
    <location>
        <begin position="1893"/>
        <end position="1902"/>
    </location>
</feature>
<feature type="strand" evidence="58">
    <location>
        <begin position="1906"/>
        <end position="1910"/>
    </location>
</feature>
<feature type="helix" evidence="58">
    <location>
        <begin position="1912"/>
        <end position="1915"/>
    </location>
</feature>
<feature type="strand" evidence="58">
    <location>
        <begin position="1923"/>
        <end position="1927"/>
    </location>
</feature>
<feature type="strand" evidence="58">
    <location>
        <begin position="1930"/>
        <end position="1937"/>
    </location>
</feature>
<feature type="turn" evidence="58">
    <location>
        <begin position="1938"/>
        <end position="1940"/>
    </location>
</feature>
<feature type="strand" evidence="58">
    <location>
        <begin position="1941"/>
        <end position="1949"/>
    </location>
</feature>
<feature type="helix" evidence="58">
    <location>
        <begin position="1952"/>
        <end position="1959"/>
    </location>
</feature>
<feature type="strand" evidence="58">
    <location>
        <begin position="1971"/>
        <end position="1975"/>
    </location>
</feature>
<feature type="helix" evidence="52">
    <location>
        <begin position="1983"/>
        <end position="1985"/>
    </location>
</feature>
<feature type="helix" evidence="58">
    <location>
        <begin position="1988"/>
        <end position="1996"/>
    </location>
</feature>
<feature type="helix" evidence="52">
    <location>
        <begin position="2002"/>
        <end position="2004"/>
    </location>
</feature>
<feature type="helix" evidence="58">
    <location>
        <begin position="2011"/>
        <end position="2016"/>
    </location>
</feature>
<feature type="turn" evidence="58">
    <location>
        <begin position="2021"/>
        <end position="2024"/>
    </location>
</feature>
<feature type="helix" evidence="58">
    <location>
        <begin position="2028"/>
        <end position="2039"/>
    </location>
</feature>
<feature type="helix" evidence="58">
    <location>
        <begin position="2045"/>
        <end position="2053"/>
    </location>
</feature>
<feature type="helix" evidence="58">
    <location>
        <begin position="2062"/>
        <end position="2064"/>
    </location>
</feature>
<feature type="helix" evidence="58">
    <location>
        <begin position="2069"/>
        <end position="2071"/>
    </location>
</feature>
<feature type="strand" evidence="58">
    <location>
        <begin position="2081"/>
        <end position="2083"/>
    </location>
</feature>
<feature type="strand" evidence="58">
    <location>
        <begin position="2089"/>
        <end position="2091"/>
    </location>
</feature>
<feature type="strand" evidence="52">
    <location>
        <begin position="2095"/>
        <end position="2098"/>
    </location>
</feature>
<feature type="helix" evidence="58">
    <location>
        <begin position="2099"/>
        <end position="2101"/>
    </location>
</feature>
<feature type="strand" evidence="58">
    <location>
        <begin position="2102"/>
        <end position="2104"/>
    </location>
</feature>
<feature type="helix" evidence="58">
    <location>
        <begin position="2105"/>
        <end position="2115"/>
    </location>
</feature>
<feature type="helix" evidence="46">
    <location>
        <begin position="2528"/>
        <end position="2538"/>
    </location>
</feature>
<feature type="helix" evidence="46">
    <location>
        <begin position="2541"/>
        <end position="2547"/>
    </location>
</feature>
<feature type="turn" evidence="46">
    <location>
        <begin position="2548"/>
        <end position="2551"/>
    </location>
</feature>
<feature type="strand" evidence="46">
    <location>
        <begin position="2553"/>
        <end position="2556"/>
    </location>
</feature>
<feature type="helix" evidence="46">
    <location>
        <begin position="2558"/>
        <end position="2565"/>
    </location>
</feature>
<feature type="strand" evidence="51">
    <location>
        <begin position="2569"/>
        <end position="2571"/>
    </location>
</feature>
<feature type="helix" evidence="46">
    <location>
        <begin position="2578"/>
        <end position="2587"/>
    </location>
</feature>
<feature type="strand" evidence="46">
    <location>
        <begin position="2595"/>
        <end position="2600"/>
    </location>
</feature>
<feature type="turn" evidence="44">
    <location>
        <begin position="2603"/>
        <end position="2605"/>
    </location>
</feature>
<feature type="helix" evidence="46">
    <location>
        <begin position="2606"/>
        <end position="2612"/>
    </location>
</feature>
<feature type="strand" evidence="46">
    <location>
        <begin position="2617"/>
        <end position="2623"/>
    </location>
</feature>
<feature type="helix" evidence="46">
    <location>
        <begin position="2641"/>
        <end position="2643"/>
    </location>
</feature>
<feature type="strand" evidence="46">
    <location>
        <begin position="2644"/>
        <end position="2647"/>
    </location>
</feature>
<feature type="helix" evidence="46">
    <location>
        <begin position="2652"/>
        <end position="2654"/>
    </location>
</feature>
<feature type="strand" evidence="46">
    <location>
        <begin position="2661"/>
        <end position="2665"/>
    </location>
</feature>
<feature type="helix" evidence="46">
    <location>
        <begin position="2674"/>
        <end position="2692"/>
    </location>
</feature>
<feature type="strand" evidence="46">
    <location>
        <begin position="2697"/>
        <end position="2704"/>
    </location>
</feature>
<feature type="helix" evidence="46">
    <location>
        <begin position="2709"/>
        <end position="2722"/>
    </location>
</feature>
<feature type="strand" evidence="46">
    <location>
        <begin position="2725"/>
        <end position="2727"/>
    </location>
</feature>
<feature type="strand" evidence="46">
    <location>
        <begin position="2739"/>
        <end position="2742"/>
    </location>
</feature>
<feature type="helix" evidence="46">
    <location>
        <begin position="2749"/>
        <end position="2762"/>
    </location>
</feature>
<feature type="strand" evidence="46">
    <location>
        <begin position="2765"/>
        <end position="2767"/>
    </location>
</feature>
<feature type="strand" evidence="46">
    <location>
        <begin position="2772"/>
        <end position="2775"/>
    </location>
</feature>
<feature type="helix" evidence="54">
    <location>
        <begin position="2795"/>
        <end position="2808"/>
    </location>
</feature>
<feature type="turn" evidence="54">
    <location>
        <begin position="2809"/>
        <end position="2812"/>
    </location>
</feature>
<feature type="strand" evidence="54">
    <location>
        <begin position="2822"/>
        <end position="2832"/>
    </location>
</feature>
<feature type="helix" evidence="54">
    <location>
        <begin position="2844"/>
        <end position="2848"/>
    </location>
</feature>
<feature type="helix" evidence="54">
    <location>
        <begin position="2851"/>
        <end position="2855"/>
    </location>
</feature>
<feature type="helix" evidence="54">
    <location>
        <begin position="2857"/>
        <end position="2860"/>
    </location>
</feature>
<feature type="helix" evidence="54">
    <location>
        <begin position="2869"/>
        <end position="2878"/>
    </location>
</feature>
<feature type="helix" evidence="54">
    <location>
        <begin position="2889"/>
        <end position="2906"/>
    </location>
</feature>
<feature type="turn" evidence="55">
    <location>
        <begin position="2907"/>
        <end position="2909"/>
    </location>
</feature>
<feature type="helix" evidence="54">
    <location>
        <begin position="2917"/>
        <end position="2924"/>
    </location>
</feature>
<feature type="helix" evidence="54">
    <location>
        <begin position="2943"/>
        <end position="2947"/>
    </location>
</feature>
<feature type="helix" evidence="54">
    <location>
        <begin position="2950"/>
        <end position="2964"/>
    </location>
</feature>
<feature type="strand" evidence="54">
    <location>
        <begin position="2973"/>
        <end position="2975"/>
    </location>
</feature>
<feature type="strand" evidence="54">
    <location>
        <begin position="2996"/>
        <end position="2998"/>
    </location>
</feature>
<feature type="helix" evidence="54">
    <location>
        <begin position="3000"/>
        <end position="3010"/>
    </location>
</feature>
<feature type="helix" evidence="54">
    <location>
        <begin position="3012"/>
        <end position="3015"/>
    </location>
</feature>
<feature type="turn" evidence="54">
    <location>
        <begin position="3016"/>
        <end position="3019"/>
    </location>
</feature>
<feature type="helix" evidence="54">
    <location>
        <begin position="3021"/>
        <end position="3024"/>
    </location>
</feature>
<feature type="strand" evidence="54">
    <location>
        <begin position="3025"/>
        <end position="3027"/>
    </location>
</feature>
<feature type="helix" evidence="54">
    <location>
        <begin position="3033"/>
        <end position="3044"/>
    </location>
</feature>
<feature type="strand" evidence="54">
    <location>
        <begin position="3046"/>
        <end position="3049"/>
    </location>
</feature>
<feature type="helix" evidence="54">
    <location>
        <begin position="3059"/>
        <end position="3062"/>
    </location>
</feature>
<feature type="helix" evidence="54">
    <location>
        <begin position="3065"/>
        <end position="3071"/>
    </location>
</feature>
<feature type="helix" evidence="54">
    <location>
        <begin position="3072"/>
        <end position="3077"/>
    </location>
</feature>
<feature type="helix" evidence="54">
    <location>
        <begin position="3080"/>
        <end position="3093"/>
    </location>
</feature>
<feature type="strand" evidence="54">
    <location>
        <begin position="3095"/>
        <end position="3104"/>
    </location>
</feature>
<feature type="helix" evidence="54">
    <location>
        <begin position="3106"/>
        <end position="3108"/>
    </location>
</feature>
<feature type="strand" evidence="54">
    <location>
        <begin position="3110"/>
        <end position="3118"/>
    </location>
</feature>
<feature type="helix" evidence="54">
    <location>
        <begin position="3128"/>
        <end position="3147"/>
    </location>
</feature>
<feature type="helix" evidence="54">
    <location>
        <begin position="3154"/>
        <end position="3157"/>
    </location>
</feature>
<feature type="helix" evidence="54">
    <location>
        <begin position="3163"/>
        <end position="3178"/>
    </location>
</feature>
<feature type="strand" evidence="54">
    <location>
        <begin position="3180"/>
        <end position="3183"/>
    </location>
</feature>
<feature type="strand" evidence="54">
    <location>
        <begin position="3186"/>
        <end position="3189"/>
    </location>
</feature>
<feature type="helix" evidence="54">
    <location>
        <begin position="3194"/>
        <end position="3198"/>
    </location>
</feature>
<feature type="helix" evidence="54">
    <location>
        <begin position="3201"/>
        <end position="3205"/>
    </location>
</feature>
<feature type="strand" evidence="56">
    <location>
        <begin position="3210"/>
        <end position="3213"/>
    </location>
</feature>
<feature type="helix" evidence="54">
    <location>
        <begin position="3225"/>
        <end position="3227"/>
    </location>
</feature>
<feature type="strand" evidence="54">
    <location>
        <begin position="3233"/>
        <end position="3239"/>
    </location>
</feature>
<feature type="strand" evidence="54">
    <location>
        <begin position="3245"/>
        <end position="3250"/>
    </location>
</feature>
<feature type="helix" evidence="54">
    <location>
        <begin position="3253"/>
        <end position="3260"/>
    </location>
</feature>
<feature type="helix" evidence="54">
    <location>
        <begin position="3270"/>
        <end position="3287"/>
    </location>
</feature>
<feature type="helix" evidence="54">
    <location>
        <begin position="3292"/>
        <end position="3304"/>
    </location>
</feature>
<feature type="strand" evidence="54">
    <location>
        <begin position="3326"/>
        <end position="3329"/>
    </location>
</feature>
<feature type="helix" evidence="54">
    <location>
        <begin position="3331"/>
        <end position="3339"/>
    </location>
</feature>
<feature type="turn" evidence="54">
    <location>
        <begin position="3340"/>
        <end position="3342"/>
    </location>
</feature>
<feature type="helix" evidence="54">
    <location>
        <begin position="3355"/>
        <end position="3357"/>
    </location>
</feature>
<feature type="helix" evidence="54">
    <location>
        <begin position="3363"/>
        <end position="3368"/>
    </location>
</feature>
<feature type="helix" evidence="54">
    <location>
        <begin position="3376"/>
        <end position="3383"/>
    </location>
</feature>
<feature type="helix" evidence="54">
    <location>
        <begin position="3385"/>
        <end position="3396"/>
    </location>
</feature>
<sequence>MKNPKKKSGGFRIVNMLKRGVARVSPFGGLKRLPAGLLLGHGPIRMVLAILAFLRFTAIKPSLGLINRWGSVGKKEAMEIIKKFKKDLAAMLRIINARKEKKRRGADTSVGIVGLLLTTAMAAEVTRRGSAYYMYLDRNDAGEAISFPTTLGMNKCYIQIMDLGHMCDATMSYECPMLDEGVEPDDVDCWCNTTSTWVVYGTCHHKKGEARRSRRAVTLPSHSTRKLQTRSQTWLESREYTKHLIRVENWIFRNPGFALAAAAIAWLLGSSTSQKVIYLVMILLIAPAYSIRCIGVSNRDFVEGMSGGTWVDVVLEHGGCVTVMAQDKPTVDIELVTTTVSNMAEVRSYCYEASISDMASDSRCPTQGEAYLDKQSDTQYVCKRTLVDRGWGNGCGLFGKGSLVTCAKFACSKKMTGKSIQPENLEYRIMLSVHGSQHSGMIVNDTGHETDENRAKVEITPNSPRAEATLGGFGSLGLDCEPRTGLDFSDLYYLTMNNKHWLVHKEWFHDIPLPWHAGADTGTPHWNNKEALVEFKDAHAKRQTVVVLGSQEGAVHTALAGALEAEMDGAKGRLSSGHLKCRLKMDKLRLKGVSYSLCTAAFTFTKIPAETLHGTVTVEVQYAGTDGPCKVPAQMAVDMQTLTPVGRLITANPVITESTENSKMMLELDPPFGDSYIVIGVGEKKITHHWHRSGSTIGKAFEATVRGAKRMAVLGDTAWDFGSVGGALNSLGKGIHQIFGAAFKSLFGGMSWFSQILIGTLLMWLGLNTKNGSISLMCLALGGVLIFLSTAVSADVGCSVDFSKKETRCGTGVFVYNDVEAWRDRYKYHPDSPRRLAAAVKQAWEDGICGISSVSRMENIMWRSVEGELNAILEENGVQLTVVVGSVKNPMWRGPQRLPVPVNELPHGWKAWGKSYFVRAAKTNNSFVVDGDTLKECPLKHRAWNSFLVEDHGFGVFHTSVWLKVREDYSLECDPAVIGTAVKGKEAVHSDLGYWIESEKNDTWRLKRAHLIEMKTCEWPKSHTLWTDGIEESDLIIPKSLAGPLSHHNTREGYRTQMKGPWHSEELEIRFEECPGTKVHVEETCGTRGPSLRSTTASGRVIEEWCCRECTMPPLSFRAKDGCWYGMEIRPRKEPESNLVRSMVTAGSTDHMDHFSLGVLVILLMVQEGLKKRMTTKIIISTSMAVLVAMILGGFSMSDLAKLAILMGATFAEMNTGGDVAHLALIAAFKVRPALLVSFIFRANWTPRESMLLALASCLLQTAISALEGDLMVLINGFALAWLAIRAMVVPRTDNITLAILAALTPLARGTLLVAWRAGLATCGGFMLLSLKGKGSVKKNLPFVMALGLTAVRLVDPINVVGLLLLTRSGKRSWPPSEVLTAVGLICALAGGFAKADIEMAGPMAAVGLLIVSYVVSGKSVDMYIERAGDITWEKDAEVTGNSPRLDVALDESGDFSLVEDDGPPMREIILKVVLMTICGMNPIAIPFAAGAWYVYVKTGKRSGALWDVPAPKEVKKGETTDGVYRVMTRRLLGSTQVGVGVMQEGVFHTMWHVTKGSALRSGEGRLDPYWGDVKQDLVSYCGPWKLDAAWDGHSEVQLLAVPPGERARNIQTLPGIFKTKDGDIGAVALDYPAGTSGSPILDKCGRVIGLYGNGVVIKNGSYVSAITQGRREEETPVECFEPSMLKKKQLTVLDLHPGAGKTRRVLPEIVREAIKTRLRTVILAPTRVVAAEMEEALRGLPVRYMTTAVNVTHSGTEIVDLMCHATFTSRLLQPIRVPNYNLYIMDEAHFTDPSSIAARGYISTRVEMGEAAAIFMTATPPGTRDAFPDSNSPIMDTEVEVPERAWSSGFDWVTDHSGKTVWFVPSVRNGNEIAACLTKAGKRVIQLSRKTFETEFQKTKHQEWDFVVTTDISEMGANFKADRVIDSRRCLKPVILDGERVILAGPMPVTHASAAQRRGRIGRNPNKPGDEYLYGGGCAETDEDHAHWLEARMLLDNIYLQDGLIASLYRPEADKVAAIEGEFKLRTEQRKTFVELMKRGDLPVWLAYQVASAGITYTDRRWCFDGTTNNTIMEDSVPAEVWTRHGEKRVLKPRWMDARVCSDHAALKSFKEFAAGKRGAAFGVMEALGTLPGHMTERFQEAIDNLAVLMRAETGSRPYKAAAAQLPETLETIMLLGLLGTVSLGIFFVLMRNKGIGKMGFGMVTLGASAWLMWLSEIEPARIACVLIVVFLLLVVLIPEPEKQRSPQDNQMAIIIMVAVGLLGLITANELGWLERTKSDLSHLMGRREEGATIGFSMDIDLRPASAWAIYAALTTFITPAVQHAVTTSYNNYSLMAMATQAGVLFGMGKGMPFYAWDFGVPLLMIGCYSQLTPLTLIVAIILLVAHYMYLIPGLQAAAARAAQKRTAAGIMKNPVVDGIVVTDIDTMTIDPQVEKKMGQVLLIAVAVSSAILSRTAWGWGEAGALITAATSTLWEGSPNKYWNSSTATSLCNIFRGSYLAGASLIYTVTRNAGLVKRRGGGTGETLGEKWKARLNQMSALEFYSYKKSGITEVCREEARRALKDGVATGGHAVSRGSAKLRWLVERGYLQPYGKVIDLGCGRGGWSYYAATIRKVQEVKGYTKGGPGHEEPMLVQSYGWNIVRLKSGVDVFHMAAEPCDTLLCDIGESSSSPEVEEARTLRVLSMVGDWLEKRPGAFCIKVLCPYTSTMMETLERLQRRYGGGLVRVPLSRNSTHEMYWVSGAKSNTIKSVSTTSQLLLGRMDGPRRPVKYEEDVNLGSGTRAVVSCAEAPNMKIIGNRIERIRSEHAETWFFDENHPYRTWAYHGSYEAPTQGSASSLINGVVRLLSKPWDVVTGVTGIAMTDTTPYGQQRVFKEKVDTRVPDPQEGTRQVMSMVSSWLWKELGKHKRPRVCTKEEFINKVRSNAALGAIFEEEKEWKTAVEAVNDPRFWALVDKEREHHLRGECQSCVYNMMGKREKKQGEFGKAKGSRAIWYMWLGARFLEFEALGFLNEDHWMGRENSGGGVEGLGLQRLGYVLEEMSRIPGGRMYADDTAGWDTRISRFDLENEALITNQMEKGHRALALAIIKYTYQNKVVKVLRPAEKGKTVMDIISRQDQRGSGQVVTYALNTFTNLVVQLIRNMEAEEVLEMQDLWLLRRSEKVTNWLQSNGWDRLKRMAVSGDDCVVKPIDDRFAHALRFLNDMGKVRKDTQEWKPSTGWDNWEEVPFCSHHFNKLHLKDGRSIVVPCRHQDELIGRARVSPGAGWSIRETACLAKSYAQMWQLLYFHRRDLRLMANAICSSVPVDWVPTGRTTWSIHGKGEWMTTEDMLVVWNRVWIEENDHMEDKTPVTKWTDIPYLGKREDLWCGSLIGHRPRTTWAENIKNTVNMVRRIIGDEEKYMDYLSTQVRYLGEEGSTPGVL</sequence>
<organism>
    <name type="scientific">Zika virus (isolate ZIKV/Human/French Polynesia/10087PF/2013)</name>
    <name type="common">ZIKV</name>
    <dbReference type="NCBI Taxonomy" id="2043570"/>
    <lineage>
        <taxon>Viruses</taxon>
        <taxon>Riboviria</taxon>
        <taxon>Orthornavirae</taxon>
        <taxon>Kitrinoviricota</taxon>
        <taxon>Flasuviricetes</taxon>
        <taxon>Amarillovirales</taxon>
        <taxon>Flaviviridae</taxon>
        <taxon>Orthoflavivirus</taxon>
        <taxon>Orthoflavivirus zikaense</taxon>
    </lineage>
</organism>
<dbReference type="EC" id="3.4.21.91"/>
<dbReference type="EC" id="3.6.1.15"/>
<dbReference type="EC" id="3.6.4.13"/>
<dbReference type="EC" id="2.1.1.56" evidence="19"/>
<dbReference type="EC" id="2.1.1.57" evidence="19"/>
<dbReference type="EC" id="2.7.7.48" evidence="31"/>
<dbReference type="EMBL" id="KJ776791">
    <property type="protein sequence ID" value="AHZ13508.1"/>
    <property type="molecule type" value="Genomic_RNA"/>
</dbReference>
<dbReference type="EMBL" id="KX447509">
    <property type="protein sequence ID" value="ANO46301.1"/>
    <property type="molecule type" value="Genomic_RNA"/>
</dbReference>
<dbReference type="EMBL" id="KX447510">
    <property type="protein sequence ID" value="ANO46302.1"/>
    <property type="molecule type" value="Genomic_RNA"/>
</dbReference>
<dbReference type="EMBL" id="KX447512">
    <property type="protein sequence ID" value="ANO46304.1"/>
    <property type="molecule type" value="Genomic_RNA"/>
</dbReference>
<dbReference type="PDB" id="5GOZ">
    <property type="method" value="X-ray"/>
    <property type="resolution" value="2.05 A"/>
    <property type="chains" value="A/B/C=2524-2785"/>
</dbReference>
<dbReference type="PDB" id="5GP1">
    <property type="method" value="X-ray"/>
    <property type="resolution" value="2.44 A"/>
    <property type="chains" value="A/B/C=2524-2785"/>
</dbReference>
<dbReference type="PDB" id="5H30">
    <property type="method" value="EM"/>
    <property type="resolution" value="4.40 A"/>
    <property type="chains" value="A/B/C=291-794, D/E/F=216-290"/>
</dbReference>
<dbReference type="PDB" id="5H32">
    <property type="method" value="EM"/>
    <property type="resolution" value="12.00 A"/>
    <property type="chains" value="A/B/C=291-693"/>
</dbReference>
<dbReference type="PDB" id="5H37">
    <property type="method" value="EM"/>
    <property type="resolution" value="4.00 A"/>
    <property type="chains" value="A/B/C=291-794, D/E/F=216-290"/>
</dbReference>
<dbReference type="PDB" id="5IRE">
    <property type="method" value="EM"/>
    <property type="resolution" value="3.80 A"/>
    <property type="chains" value="A/C/E=291-794, B/D/F=216-290"/>
</dbReference>
<dbReference type="PDB" id="5IZ7">
    <property type="method" value="EM"/>
    <property type="resolution" value="3.70 A"/>
    <property type="chains" value="A/B/C=291-794, D/E/F=216-290"/>
</dbReference>
<dbReference type="PDB" id="5JMT">
    <property type="method" value="X-ray"/>
    <property type="resolution" value="1.80 A"/>
    <property type="chains" value="A=1674-2119"/>
</dbReference>
<dbReference type="PDB" id="5KQR">
    <property type="method" value="X-ray"/>
    <property type="resolution" value="1.33 A"/>
    <property type="chains" value="A=2521-2786"/>
</dbReference>
<dbReference type="PDB" id="5KQS">
    <property type="method" value="X-ray"/>
    <property type="resolution" value="1.50 A"/>
    <property type="chains" value="A=2521-2786"/>
</dbReference>
<dbReference type="PDB" id="5KVE">
    <property type="method" value="X-ray"/>
    <property type="resolution" value="1.70 A"/>
    <property type="chains" value="E=588-697"/>
</dbReference>
<dbReference type="PDB" id="5LBS">
    <property type="method" value="X-ray"/>
    <property type="resolution" value="2.41 A"/>
    <property type="chains" value="A/B=291-698"/>
</dbReference>
<dbReference type="PDB" id="5LBV">
    <property type="method" value="X-ray"/>
    <property type="resolution" value="2.20 A"/>
    <property type="chains" value="A/B=291-698"/>
</dbReference>
<dbReference type="PDB" id="5LCV">
    <property type="method" value="X-ray"/>
    <property type="resolution" value="2.64 A"/>
    <property type="chains" value="A/B=291-698"/>
</dbReference>
<dbReference type="PDB" id="5M5B">
    <property type="method" value="X-ray"/>
    <property type="resolution" value="2.01 A"/>
    <property type="chains" value="A/B=2525-2786"/>
</dbReference>
<dbReference type="PDB" id="5MRK">
    <property type="method" value="X-ray"/>
    <property type="resolution" value="1.90 A"/>
    <property type="chains" value="A/B=2521-2784"/>
</dbReference>
<dbReference type="PDB" id="5NJU">
    <property type="method" value="X-ray"/>
    <property type="resolution" value="2.10 A"/>
    <property type="chains" value="A/B=2525-2784"/>
</dbReference>
<dbReference type="PDB" id="5NJV">
    <property type="method" value="X-ray"/>
    <property type="resolution" value="2.00 A"/>
    <property type="chains" value="A/B/C/D=2524-2785"/>
</dbReference>
<dbReference type="PDB" id="5U4W">
    <property type="method" value="EM"/>
    <property type="resolution" value="9.10 A"/>
    <property type="chains" value="G/I/K=726-791, H/J/L=238-290"/>
</dbReference>
<dbReference type="PDB" id="5UHY">
    <property type="method" value="EM"/>
    <property type="resolution" value="6.20 A"/>
    <property type="chains" value="A/C/E=291-686"/>
</dbReference>
<dbReference type="PDB" id="5ULP">
    <property type="method" value="X-ray"/>
    <property type="resolution" value="1.55 A"/>
    <property type="chains" value="A/B=2521-2788"/>
</dbReference>
<dbReference type="PDB" id="5Y0A">
    <property type="method" value="EM"/>
    <property type="resolution" value="22.00 A"/>
    <property type="chains" value="A/B/C=291-693"/>
</dbReference>
<dbReference type="PDB" id="5Y6M">
    <property type="method" value="X-ray"/>
    <property type="resolution" value="2.00 A"/>
    <property type="chains" value="A=1682-2119"/>
</dbReference>
<dbReference type="PDB" id="5Y6N">
    <property type="method" value="X-ray"/>
    <property type="resolution" value="1.57 A"/>
    <property type="chains" value="A=1682-2119"/>
</dbReference>
<dbReference type="PDB" id="6CO8">
    <property type="method" value="EM"/>
    <property type="resolution" value="3.10 A"/>
    <property type="chains" value="A/C/E=291-794, B/D/F=216-290"/>
</dbReference>
<dbReference type="PDB" id="6I7P">
    <property type="method" value="X-ray"/>
    <property type="resolution" value="3.98 A"/>
    <property type="chains" value="A/B/C/D/E/F=2521-3423"/>
</dbReference>
<dbReference type="PDB" id="6JFH">
    <property type="method" value="EM"/>
    <property type="resolution" value="20.00 A"/>
    <property type="chains" value="B/D/F=216-290"/>
</dbReference>
<dbReference type="PDB" id="6JFI">
    <property type="method" value="EM"/>
    <property type="resolution" value="11.00 A"/>
    <property type="chains" value="B/D/F=216-290"/>
</dbReference>
<dbReference type="PDB" id="6LD1">
    <property type="method" value="X-ray"/>
    <property type="resolution" value="1.40 A"/>
    <property type="chains" value="A=2790-3411"/>
</dbReference>
<dbReference type="PDB" id="6LD2">
    <property type="method" value="X-ray"/>
    <property type="resolution" value="1.40 A"/>
    <property type="chains" value="A=2790-3411"/>
</dbReference>
<dbReference type="PDB" id="6LD3">
    <property type="method" value="X-ray"/>
    <property type="resolution" value="2.30 A"/>
    <property type="chains" value="A=2790-3411"/>
</dbReference>
<dbReference type="PDB" id="6LD4">
    <property type="method" value="X-ray"/>
    <property type="resolution" value="1.50 A"/>
    <property type="chains" value="A=2790-3411"/>
</dbReference>
<dbReference type="PDB" id="6LD5">
    <property type="method" value="X-ray"/>
    <property type="resolution" value="1.94 A"/>
    <property type="chains" value="A=2790-3411"/>
</dbReference>
<dbReference type="PDB" id="6NIP">
    <property type="method" value="X-ray"/>
    <property type="resolution" value="4.16 A"/>
    <property type="chains" value="E/Z=291-695"/>
</dbReference>
<dbReference type="PDB" id="6NIU">
    <property type="method" value="X-ray"/>
    <property type="resolution" value="4.30 A"/>
    <property type="chains" value="A/B/E/Z=291-695"/>
</dbReference>
<dbReference type="PDB" id="6PLK">
    <property type="method" value="X-ray"/>
    <property type="resolution" value="2.30 A"/>
    <property type="chains" value="E/F=588-697"/>
</dbReference>
<dbReference type="PDB" id="6RWZ">
    <property type="method" value="X-ray"/>
    <property type="resolution" value="1.70 A"/>
    <property type="chains" value="A=1685-2125"/>
</dbReference>
<dbReference type="PDB" id="6S0J">
    <property type="method" value="X-ray"/>
    <property type="resolution" value="1.50 A"/>
    <property type="chains" value="A=1685-2125"/>
</dbReference>
<dbReference type="PDB" id="6UM3">
    <property type="method" value="X-ray"/>
    <property type="resolution" value="2.50 A"/>
    <property type="chains" value="A/B=1420-1466, A/B=1503-1684"/>
</dbReference>
<dbReference type="PDB" id="7A3N">
    <property type="method" value="X-ray"/>
    <property type="resolution" value="2.10 A"/>
    <property type="chains" value="A=291-699"/>
</dbReference>
<dbReference type="PDB" id="7A3U">
    <property type="method" value="X-ray"/>
    <property type="resolution" value="3.00 A"/>
    <property type="chains" value="A=291-699"/>
</dbReference>
<dbReference type="PDB" id="7BSD">
    <property type="method" value="X-ray"/>
    <property type="resolution" value="2.53 A"/>
    <property type="chains" value="G/I=966-1146"/>
</dbReference>
<dbReference type="PDB" id="7BU8">
    <property type="method" value="EM"/>
    <property type="resolution" value="3.80 A"/>
    <property type="chains" value="A/B/C=291-794"/>
</dbReference>
<dbReference type="PDB" id="7BUA">
    <property type="method" value="EM"/>
    <property type="resolution" value="4.80 A"/>
    <property type="chains" value="A/B/C=291-794"/>
</dbReference>
<dbReference type="PDB" id="7M1V">
    <property type="method" value="X-ray"/>
    <property type="resolution" value="1.60 A"/>
    <property type="chains" value="A/B=1420-1466, A/B=1504-1661"/>
</dbReference>
<dbReference type="PDB" id="7T17">
    <property type="method" value="EM"/>
    <property type="resolution" value="5.26 A"/>
    <property type="chains" value="A/C/E=291-682"/>
</dbReference>
<dbReference type="PDB" id="7V2Z">
    <property type="method" value="X-ray"/>
    <property type="resolution" value="2.10 A"/>
    <property type="chains" value="A=1680-2119"/>
</dbReference>
<dbReference type="PDB" id="7YAR">
    <property type="method" value="EM"/>
    <property type="resolution" value="5.90 A"/>
    <property type="chains" value="A/B/C=291-794"/>
</dbReference>
<dbReference type="PDB" id="7YW7">
    <property type="method" value="X-ray"/>
    <property type="resolution" value="2.60 A"/>
    <property type="chains" value="A/B/C/D=291-699"/>
</dbReference>
<dbReference type="PDB" id="7YW8">
    <property type="method" value="X-ray"/>
    <property type="resolution" value="2.50 A"/>
    <property type="chains" value="A/B/C/D=291-699"/>
</dbReference>
<dbReference type="PDB" id="8EE5">
    <property type="method" value="X-ray"/>
    <property type="resolution" value="3.58 A"/>
    <property type="chains" value="Z=291-695"/>
</dbReference>
<dbReference type="PDB" id="8EE8">
    <property type="method" value="X-ray"/>
    <property type="resolution" value="2.80 A"/>
    <property type="chains" value="A/B/E/Z=291-695"/>
</dbReference>
<dbReference type="PDB" id="8EED">
    <property type="method" value="X-ray"/>
    <property type="resolution" value="3.49 A"/>
    <property type="chains" value="A/B/C/D=291-695"/>
</dbReference>
<dbReference type="PDB" id="8EEE">
    <property type="method" value="X-ray"/>
    <property type="resolution" value="2.82 A"/>
    <property type="chains" value="E/Z=291-695"/>
</dbReference>
<dbReference type="PDBsum" id="5GOZ"/>
<dbReference type="PDBsum" id="5GP1"/>
<dbReference type="PDBsum" id="5H30"/>
<dbReference type="PDBsum" id="5H32"/>
<dbReference type="PDBsum" id="5H37"/>
<dbReference type="PDBsum" id="5IRE"/>
<dbReference type="PDBsum" id="5IZ7"/>
<dbReference type="PDBsum" id="5JMT"/>
<dbReference type="PDBsum" id="5KQR"/>
<dbReference type="PDBsum" id="5KQS"/>
<dbReference type="PDBsum" id="5KVE"/>
<dbReference type="PDBsum" id="5LBS"/>
<dbReference type="PDBsum" id="5LBV"/>
<dbReference type="PDBsum" id="5LCV"/>
<dbReference type="PDBsum" id="5M5B"/>
<dbReference type="PDBsum" id="5MRK"/>
<dbReference type="PDBsum" id="5NJU"/>
<dbReference type="PDBsum" id="5NJV"/>
<dbReference type="PDBsum" id="5U4W"/>
<dbReference type="PDBsum" id="5UHY"/>
<dbReference type="PDBsum" id="5ULP"/>
<dbReference type="PDBsum" id="5Y0A"/>
<dbReference type="PDBsum" id="5Y6M"/>
<dbReference type="PDBsum" id="5Y6N"/>
<dbReference type="PDBsum" id="6CO8"/>
<dbReference type="PDBsum" id="6I7P"/>
<dbReference type="PDBsum" id="6JFH"/>
<dbReference type="PDBsum" id="6JFI"/>
<dbReference type="PDBsum" id="6LD1"/>
<dbReference type="PDBsum" id="6LD2"/>
<dbReference type="PDBsum" id="6LD3"/>
<dbReference type="PDBsum" id="6LD4"/>
<dbReference type="PDBsum" id="6LD5"/>
<dbReference type="PDBsum" id="6NIP"/>
<dbReference type="PDBsum" id="6NIU"/>
<dbReference type="PDBsum" id="6PLK"/>
<dbReference type="PDBsum" id="6RWZ"/>
<dbReference type="PDBsum" id="6S0J"/>
<dbReference type="PDBsum" id="6UM3"/>
<dbReference type="PDBsum" id="7A3N"/>
<dbReference type="PDBsum" id="7A3U"/>
<dbReference type="PDBsum" id="7BSD"/>
<dbReference type="PDBsum" id="7BU8"/>
<dbReference type="PDBsum" id="7BUA"/>
<dbReference type="PDBsum" id="7M1V"/>
<dbReference type="PDBsum" id="7T17"/>
<dbReference type="PDBsum" id="7V2Z"/>
<dbReference type="PDBsum" id="7YAR"/>
<dbReference type="PDBsum" id="7YW7"/>
<dbReference type="PDBsum" id="7YW8"/>
<dbReference type="PDBsum" id="8EE5"/>
<dbReference type="PDBsum" id="8EE8"/>
<dbReference type="PDBsum" id="8EED"/>
<dbReference type="PDBsum" id="8EEE"/>
<dbReference type="EMDB" id="EMD-0932"/>
<dbReference type="EMDB" id="EMD-0933"/>
<dbReference type="EMDB" id="EMD-30192"/>
<dbReference type="EMDB" id="EMD-30193"/>
<dbReference type="EMDB" id="EMD-33718"/>
<dbReference type="EMDB" id="EMD-7543"/>
<dbReference type="EMDB" id="EMD-8139"/>
<dbReference type="EMDB" id="EMD-8508"/>
<dbReference type="EMDB" id="EMD-9131"/>
<dbReference type="EMDB" id="EMD-9542"/>
<dbReference type="EMDB" id="EMD-9573"/>
<dbReference type="EMDB" id="EMD-9574"/>
<dbReference type="EMDB" id="EMD-9575"/>
<dbReference type="EMDB" id="EMD-9811"/>
<dbReference type="EMDB" id="EMD-9812"/>
<dbReference type="SMR" id="A0A024B7W1"/>
<dbReference type="IntAct" id="A0A024B7W1">
    <property type="interactions" value="1"/>
</dbReference>
<dbReference type="BindingDB" id="A0A024B7W1"/>
<dbReference type="iPTMnet" id="A0A024B7W1"/>
<dbReference type="ABCD" id="A0A024B7W1">
    <property type="antibodies" value="12 sequenced antibodies"/>
</dbReference>
<dbReference type="BRENDA" id="2.7.7.48">
    <property type="organism ID" value="9645"/>
</dbReference>
<dbReference type="BRENDA" id="3.4.21.91">
    <property type="organism ID" value="9645"/>
</dbReference>
<dbReference type="EvolutionaryTrace" id="A0A024B7W1"/>
<dbReference type="Proteomes" id="UP000112691">
    <property type="component" value="Genome"/>
</dbReference>
<dbReference type="Proteomes" id="UP000137079">
    <property type="component" value="Genome"/>
</dbReference>
<dbReference type="Proteomes" id="UP000151151">
    <property type="component" value="Segment"/>
</dbReference>
<dbReference type="Proteomes" id="UP000168269">
    <property type="component" value="Genome"/>
</dbReference>
<dbReference type="GO" id="GO:0005813">
    <property type="term" value="C:centrosome"/>
    <property type="evidence" value="ECO:0000314"/>
    <property type="project" value="UniProt"/>
</dbReference>
<dbReference type="GO" id="GO:0005576">
    <property type="term" value="C:extracellular region"/>
    <property type="evidence" value="ECO:0007669"/>
    <property type="project" value="UniProtKB-SubCell"/>
</dbReference>
<dbReference type="GO" id="GO:0044167">
    <property type="term" value="C:host cell endoplasmic reticulum membrane"/>
    <property type="evidence" value="ECO:0007669"/>
    <property type="project" value="UniProtKB-SubCell"/>
</dbReference>
<dbReference type="GO" id="GO:0042025">
    <property type="term" value="C:host cell nucleus"/>
    <property type="evidence" value="ECO:0007669"/>
    <property type="project" value="UniProtKB-SubCell"/>
</dbReference>
<dbReference type="GO" id="GO:0044220">
    <property type="term" value="C:host cell perinuclear region of cytoplasm"/>
    <property type="evidence" value="ECO:0007669"/>
    <property type="project" value="UniProtKB-SubCell"/>
</dbReference>
<dbReference type="GO" id="GO:0016020">
    <property type="term" value="C:membrane"/>
    <property type="evidence" value="ECO:0007669"/>
    <property type="project" value="UniProtKB-KW"/>
</dbReference>
<dbReference type="GO" id="GO:0019028">
    <property type="term" value="C:viral capsid"/>
    <property type="evidence" value="ECO:0007669"/>
    <property type="project" value="UniProtKB-KW"/>
</dbReference>
<dbReference type="GO" id="GO:0019031">
    <property type="term" value="C:viral envelope"/>
    <property type="evidence" value="ECO:0007669"/>
    <property type="project" value="UniProtKB-KW"/>
</dbReference>
<dbReference type="GO" id="GO:0055036">
    <property type="term" value="C:virion membrane"/>
    <property type="evidence" value="ECO:0007669"/>
    <property type="project" value="UniProtKB-SubCell"/>
</dbReference>
<dbReference type="GO" id="GO:0051539">
    <property type="term" value="F:4 iron, 4 sulfur cluster binding"/>
    <property type="evidence" value="ECO:0007669"/>
    <property type="project" value="UniProtKB-KW"/>
</dbReference>
<dbReference type="GO" id="GO:0005524">
    <property type="term" value="F:ATP binding"/>
    <property type="evidence" value="ECO:0007669"/>
    <property type="project" value="UniProtKB-KW"/>
</dbReference>
<dbReference type="GO" id="GO:0016887">
    <property type="term" value="F:ATP hydrolysis activity"/>
    <property type="evidence" value="ECO:0007669"/>
    <property type="project" value="RHEA"/>
</dbReference>
<dbReference type="GO" id="GO:0003725">
    <property type="term" value="F:double-stranded RNA binding"/>
    <property type="evidence" value="ECO:0007669"/>
    <property type="project" value="InterPro"/>
</dbReference>
<dbReference type="GO" id="GO:0005525">
    <property type="term" value="F:GTP binding"/>
    <property type="evidence" value="ECO:0007669"/>
    <property type="project" value="UniProtKB-KW"/>
</dbReference>
<dbReference type="GO" id="GO:0008289">
    <property type="term" value="F:lipid binding"/>
    <property type="evidence" value="ECO:0000269"/>
    <property type="project" value="DisProt"/>
</dbReference>
<dbReference type="GO" id="GO:0046872">
    <property type="term" value="F:metal ion binding"/>
    <property type="evidence" value="ECO:0007669"/>
    <property type="project" value="UniProtKB-KW"/>
</dbReference>
<dbReference type="GO" id="GO:0060090">
    <property type="term" value="F:molecular adaptor activity"/>
    <property type="evidence" value="ECO:0000314"/>
    <property type="project" value="UniProt"/>
</dbReference>
<dbReference type="GO" id="GO:0004483">
    <property type="term" value="F:mRNA (nucleoside-2'-O-)-methyltransferase activity"/>
    <property type="evidence" value="ECO:0007669"/>
    <property type="project" value="UniProtKB-EC"/>
</dbReference>
<dbReference type="GO" id="GO:0004482">
    <property type="term" value="F:mRNA 5'-cap (guanine-N7-)-methyltransferase activity"/>
    <property type="evidence" value="ECO:0007669"/>
    <property type="project" value="UniProtKB-EC"/>
</dbReference>
<dbReference type="GO" id="GO:0046983">
    <property type="term" value="F:protein dimerization activity"/>
    <property type="evidence" value="ECO:0007669"/>
    <property type="project" value="InterPro"/>
</dbReference>
<dbReference type="GO" id="GO:0003724">
    <property type="term" value="F:RNA helicase activity"/>
    <property type="evidence" value="ECO:0007669"/>
    <property type="project" value="UniProtKB-EC"/>
</dbReference>
<dbReference type="GO" id="GO:0003968">
    <property type="term" value="F:RNA-directed RNA polymerase activity"/>
    <property type="evidence" value="ECO:0007669"/>
    <property type="project" value="UniProtKB-KW"/>
</dbReference>
<dbReference type="GO" id="GO:0004252">
    <property type="term" value="F:serine-type endopeptidase activity"/>
    <property type="evidence" value="ECO:0007669"/>
    <property type="project" value="InterPro"/>
</dbReference>
<dbReference type="GO" id="GO:0005198">
    <property type="term" value="F:structural molecule activity"/>
    <property type="evidence" value="ECO:0007669"/>
    <property type="project" value="InterPro"/>
</dbReference>
<dbReference type="GO" id="GO:0075512">
    <property type="term" value="P:clathrin-dependent endocytosis of virus by host cell"/>
    <property type="evidence" value="ECO:0007669"/>
    <property type="project" value="UniProtKB-KW"/>
</dbReference>
<dbReference type="GO" id="GO:0039654">
    <property type="term" value="P:fusion of virus membrane with host endosome membrane"/>
    <property type="evidence" value="ECO:0007669"/>
    <property type="project" value="UniProtKB-KW"/>
</dbReference>
<dbReference type="GO" id="GO:0045824">
    <property type="term" value="P:negative regulation of innate immune response"/>
    <property type="evidence" value="ECO:0000314"/>
    <property type="project" value="UniProt"/>
</dbReference>
<dbReference type="GO" id="GO:0006508">
    <property type="term" value="P:proteolysis"/>
    <property type="evidence" value="ECO:0007669"/>
    <property type="project" value="UniProtKB-KW"/>
</dbReference>
<dbReference type="GO" id="GO:0039520">
    <property type="term" value="P:symbiont-mediated activation of host autophagy"/>
    <property type="evidence" value="ECO:0007669"/>
    <property type="project" value="UniProtKB-KW"/>
</dbReference>
<dbReference type="GO" id="GO:0039574">
    <property type="term" value="P:symbiont-mediated suppression of host JAK-STAT cascade via inhibition of host TYK2 activity"/>
    <property type="evidence" value="ECO:0007669"/>
    <property type="project" value="UniProtKB-KW"/>
</dbReference>
<dbReference type="GO" id="GO:0039563">
    <property type="term" value="P:symbiont-mediated suppression of host JAK-STAT cascade via inhibition of STAT1 activity"/>
    <property type="evidence" value="ECO:0007669"/>
    <property type="project" value="UniProtKB-KW"/>
</dbReference>
<dbReference type="GO" id="GO:0039564">
    <property type="term" value="P:symbiont-mediated suppression of host JAK-STAT cascade via inhibition of STAT2 activity"/>
    <property type="evidence" value="ECO:0007669"/>
    <property type="project" value="UniProtKB-KW"/>
</dbReference>
<dbReference type="GO" id="GO:0039502">
    <property type="term" value="P:symbiont-mediated suppression of host type I interferon-mediated signaling pathway"/>
    <property type="evidence" value="ECO:0007669"/>
    <property type="project" value="UniProtKB-KW"/>
</dbReference>
<dbReference type="GO" id="GO:0039694">
    <property type="term" value="P:viral RNA genome replication"/>
    <property type="evidence" value="ECO:0007669"/>
    <property type="project" value="InterPro"/>
</dbReference>
<dbReference type="GO" id="GO:0019062">
    <property type="term" value="P:virion attachment to host cell"/>
    <property type="evidence" value="ECO:0007669"/>
    <property type="project" value="UniProtKB-KW"/>
</dbReference>
<dbReference type="CDD" id="cd20761">
    <property type="entry name" value="capping_2-OMTase_Flaviviridae"/>
    <property type="match status" value="1"/>
</dbReference>
<dbReference type="CDD" id="cd17931">
    <property type="entry name" value="DEXHc_viral_Ns3"/>
    <property type="match status" value="1"/>
</dbReference>
<dbReference type="CDD" id="cd12149">
    <property type="entry name" value="Flavi_E_C"/>
    <property type="match status" value="1"/>
</dbReference>
<dbReference type="CDD" id="cd17038">
    <property type="entry name" value="Flavi_M"/>
    <property type="match status" value="1"/>
</dbReference>
<dbReference type="CDD" id="cd23204">
    <property type="entry name" value="Flavivirus_RdRp"/>
    <property type="match status" value="1"/>
</dbReference>
<dbReference type="CDD" id="cd18806">
    <property type="entry name" value="SF2_C_viral"/>
    <property type="match status" value="1"/>
</dbReference>
<dbReference type="FunFam" id="1.20.1280.260:FF:000001">
    <property type="entry name" value="Envelope glycoprotein"/>
    <property type="match status" value="1"/>
</dbReference>
<dbReference type="FunFam" id="2.60.40.350:FF:000001">
    <property type="entry name" value="Envelope glycoprotein"/>
    <property type="match status" value="1"/>
</dbReference>
<dbReference type="FunFam" id="1.10.10.930:FF:000001">
    <property type="entry name" value="Genome polyprotein"/>
    <property type="match status" value="1"/>
</dbReference>
<dbReference type="FunFam" id="1.10.260.90:FF:000001">
    <property type="entry name" value="Genome polyprotein"/>
    <property type="match status" value="1"/>
</dbReference>
<dbReference type="FunFam" id="1.10.8.970:FF:000001">
    <property type="entry name" value="Genome polyprotein"/>
    <property type="match status" value="1"/>
</dbReference>
<dbReference type="FunFam" id="2.40.10.120:FF:000005">
    <property type="entry name" value="Genome polyprotein"/>
    <property type="match status" value="1"/>
</dbReference>
<dbReference type="FunFam" id="2.40.10.120:FF:000006">
    <property type="entry name" value="Genome polyprotein"/>
    <property type="match status" value="1"/>
</dbReference>
<dbReference type="FunFam" id="2.60.260.50:FF:000001">
    <property type="entry name" value="Genome polyprotein"/>
    <property type="match status" value="1"/>
</dbReference>
<dbReference type="FunFam" id="3.30.70.2840:FF:000001">
    <property type="entry name" value="Genome polyprotein"/>
    <property type="match status" value="1"/>
</dbReference>
<dbReference type="FunFam" id="3.30.70.2840:FF:000002">
    <property type="entry name" value="Genome polyprotein"/>
    <property type="match status" value="1"/>
</dbReference>
<dbReference type="FunFam" id="3.30.70.2840:FF:000004">
    <property type="entry name" value="Genome polyprotein"/>
    <property type="match status" value="1"/>
</dbReference>
<dbReference type="FunFam" id="3.40.50.150:FF:000105">
    <property type="entry name" value="Genome polyprotein"/>
    <property type="match status" value="1"/>
</dbReference>
<dbReference type="FunFam" id="3.40.50.300:FF:000763">
    <property type="entry name" value="Genome polyprotein"/>
    <property type="match status" value="1"/>
</dbReference>
<dbReference type="Gene3D" id="1.10.10.930">
    <property type="match status" value="1"/>
</dbReference>
<dbReference type="Gene3D" id="1.10.260.90">
    <property type="match status" value="1"/>
</dbReference>
<dbReference type="Gene3D" id="1.20.1280.260">
    <property type="match status" value="1"/>
</dbReference>
<dbReference type="Gene3D" id="2.40.10.120">
    <property type="match status" value="2"/>
</dbReference>
<dbReference type="Gene3D" id="2.60.40.350">
    <property type="match status" value="1"/>
</dbReference>
<dbReference type="Gene3D" id="1.10.8.970">
    <property type="entry name" value="Flavivirus envelope glycoprotein M-like"/>
    <property type="match status" value="1"/>
</dbReference>
<dbReference type="Gene3D" id="2.60.260.50">
    <property type="entry name" value="Flavivirus polyprotein propeptide domain"/>
    <property type="match status" value="1"/>
</dbReference>
<dbReference type="Gene3D" id="3.30.70.2840">
    <property type="entry name" value="Flavivirus RNA-directed RNA polymerase, thumb domain"/>
    <property type="match status" value="3"/>
</dbReference>
<dbReference type="Gene3D" id="3.40.50.300">
    <property type="entry name" value="P-loop containing nucleotide triphosphate hydrolases"/>
    <property type="match status" value="2"/>
</dbReference>
<dbReference type="Gene3D" id="2.60.98.10">
    <property type="entry name" value="Tick-borne Encephalitis virus Glycoprotein, domain 1"/>
    <property type="match status" value="1"/>
</dbReference>
<dbReference type="Gene3D" id="3.40.50.150">
    <property type="entry name" value="Vaccinia Virus protein VP39"/>
    <property type="match status" value="1"/>
</dbReference>
<dbReference type="Gene3D" id="3.30.67.10">
    <property type="entry name" value="Viral Envelope Glycoprotein, domain 2"/>
    <property type="match status" value="1"/>
</dbReference>
<dbReference type="Gene3D" id="3.30.387.10">
    <property type="entry name" value="Viral Envelope Glycoprotein, domain 3"/>
    <property type="match status" value="1"/>
</dbReference>
<dbReference type="InterPro" id="IPR043502">
    <property type="entry name" value="DNA/RNA_pol_sf"/>
</dbReference>
<dbReference type="InterPro" id="IPR000069">
    <property type="entry name" value="Env_glycoprot_M_flavivir"/>
</dbReference>
<dbReference type="InterPro" id="IPR038302">
    <property type="entry name" value="Env_glycoprot_M_sf_flavivir"/>
</dbReference>
<dbReference type="InterPro" id="IPR013755">
    <property type="entry name" value="Flav_gly_cen_dom_subdom1"/>
</dbReference>
<dbReference type="InterPro" id="IPR001122">
    <property type="entry name" value="Flavi_capsidC"/>
</dbReference>
<dbReference type="InterPro" id="IPR037172">
    <property type="entry name" value="Flavi_capsidC_sf"/>
</dbReference>
<dbReference type="InterPro" id="IPR011492">
    <property type="entry name" value="Flavi_DEAD"/>
</dbReference>
<dbReference type="InterPro" id="IPR027287">
    <property type="entry name" value="Flavi_E_Ig-like"/>
</dbReference>
<dbReference type="InterPro" id="IPR026470">
    <property type="entry name" value="Flavi_E_Stem/Anchor_dom"/>
</dbReference>
<dbReference type="InterPro" id="IPR038345">
    <property type="entry name" value="Flavi_E_Stem/Anchor_dom_sf"/>
</dbReference>
<dbReference type="InterPro" id="IPR011998">
    <property type="entry name" value="Flavi_Glycoprot_E_cen/dimer"/>
</dbReference>
<dbReference type="InterPro" id="IPR001157">
    <property type="entry name" value="Flavi_NS1"/>
</dbReference>
<dbReference type="InterPro" id="IPR000752">
    <property type="entry name" value="Flavi_NS2A"/>
</dbReference>
<dbReference type="InterPro" id="IPR000487">
    <property type="entry name" value="Flavi_NS2B"/>
</dbReference>
<dbReference type="InterPro" id="IPR001850">
    <property type="entry name" value="Flavi_NS3_S7"/>
</dbReference>
<dbReference type="InterPro" id="IPR000404">
    <property type="entry name" value="Flavi_NS4A"/>
</dbReference>
<dbReference type="InterPro" id="IPR001528">
    <property type="entry name" value="Flavi_NS4B"/>
</dbReference>
<dbReference type="InterPro" id="IPR046811">
    <property type="entry name" value="Flavi_NS5_thumb"/>
</dbReference>
<dbReference type="InterPro" id="IPR002535">
    <property type="entry name" value="Flavi_propep"/>
</dbReference>
<dbReference type="InterPro" id="IPR038688">
    <property type="entry name" value="Flavi_propep_sf"/>
</dbReference>
<dbReference type="InterPro" id="IPR047530">
    <property type="entry name" value="Flavi_RdRp"/>
</dbReference>
<dbReference type="InterPro" id="IPR000208">
    <property type="entry name" value="Flavi_RdRp_fingers/palm"/>
</dbReference>
<dbReference type="InterPro" id="IPR000336">
    <property type="entry name" value="Flavivir/Alphavir_Ig-like_sf"/>
</dbReference>
<dbReference type="InterPro" id="IPR014412">
    <property type="entry name" value="Gen_Poly_FLV"/>
</dbReference>
<dbReference type="InterPro" id="IPR036253">
    <property type="entry name" value="Glycoprot_cen/dimer_sf"/>
</dbReference>
<dbReference type="InterPro" id="IPR038055">
    <property type="entry name" value="Glycoprot_E_dimer_dom"/>
</dbReference>
<dbReference type="InterPro" id="IPR013756">
    <property type="entry name" value="GlyE_cen_dom_subdom2"/>
</dbReference>
<dbReference type="InterPro" id="IPR014001">
    <property type="entry name" value="Helicase_ATP-bd"/>
</dbReference>
<dbReference type="InterPro" id="IPR001650">
    <property type="entry name" value="Helicase_C-like"/>
</dbReference>
<dbReference type="InterPro" id="IPR014756">
    <property type="entry name" value="Ig_E-set"/>
</dbReference>
<dbReference type="InterPro" id="IPR026490">
    <property type="entry name" value="mRNA_cap_0/1_MeTrfase"/>
</dbReference>
<dbReference type="InterPro" id="IPR049486">
    <property type="entry name" value="NS3-hel_C_flaviviridae"/>
</dbReference>
<dbReference type="InterPro" id="IPR027417">
    <property type="entry name" value="P-loop_NTPase"/>
</dbReference>
<dbReference type="InterPro" id="IPR009003">
    <property type="entry name" value="Peptidase_S1_PA"/>
</dbReference>
<dbReference type="InterPro" id="IPR007094">
    <property type="entry name" value="RNA-dir_pol_PSvirus"/>
</dbReference>
<dbReference type="InterPro" id="IPR002877">
    <property type="entry name" value="RNA_MeTrfase_FtsJ_dom"/>
</dbReference>
<dbReference type="InterPro" id="IPR029063">
    <property type="entry name" value="SAM-dependent_MTases_sf"/>
</dbReference>
<dbReference type="NCBIfam" id="TIGR04240">
    <property type="entry name" value="flavi_E_stem"/>
    <property type="match status" value="1"/>
</dbReference>
<dbReference type="Pfam" id="PF20907">
    <property type="entry name" value="Flav_NS3-hel_C"/>
    <property type="match status" value="1"/>
</dbReference>
<dbReference type="Pfam" id="PF01003">
    <property type="entry name" value="Flavi_capsid"/>
    <property type="match status" value="1"/>
</dbReference>
<dbReference type="Pfam" id="PF07652">
    <property type="entry name" value="Flavi_DEAD"/>
    <property type="match status" value="1"/>
</dbReference>
<dbReference type="Pfam" id="PF21659">
    <property type="entry name" value="Flavi_E_stem"/>
    <property type="match status" value="1"/>
</dbReference>
<dbReference type="Pfam" id="PF02832">
    <property type="entry name" value="Flavi_glycop_C"/>
    <property type="match status" value="1"/>
</dbReference>
<dbReference type="Pfam" id="PF00869">
    <property type="entry name" value="Flavi_glycoprot"/>
    <property type="match status" value="1"/>
</dbReference>
<dbReference type="Pfam" id="PF01004">
    <property type="entry name" value="Flavi_M"/>
    <property type="match status" value="1"/>
</dbReference>
<dbReference type="Pfam" id="PF00948">
    <property type="entry name" value="Flavi_NS1"/>
    <property type="match status" value="1"/>
</dbReference>
<dbReference type="Pfam" id="PF01005">
    <property type="entry name" value="Flavi_NS2A"/>
    <property type="match status" value="1"/>
</dbReference>
<dbReference type="Pfam" id="PF01002">
    <property type="entry name" value="Flavi_NS2B"/>
    <property type="match status" value="1"/>
</dbReference>
<dbReference type="Pfam" id="PF01350">
    <property type="entry name" value="Flavi_NS4A"/>
    <property type="match status" value="1"/>
</dbReference>
<dbReference type="Pfam" id="PF01349">
    <property type="entry name" value="Flavi_NS4B"/>
    <property type="match status" value="1"/>
</dbReference>
<dbReference type="Pfam" id="PF00972">
    <property type="entry name" value="Flavi_NS5"/>
    <property type="match status" value="1"/>
</dbReference>
<dbReference type="Pfam" id="PF20483">
    <property type="entry name" value="Flavi_NS5_thumb"/>
    <property type="match status" value="1"/>
</dbReference>
<dbReference type="Pfam" id="PF01570">
    <property type="entry name" value="Flavi_propep"/>
    <property type="match status" value="1"/>
</dbReference>
<dbReference type="Pfam" id="PF01728">
    <property type="entry name" value="FtsJ"/>
    <property type="match status" value="1"/>
</dbReference>
<dbReference type="Pfam" id="PF00949">
    <property type="entry name" value="Peptidase_S7"/>
    <property type="match status" value="1"/>
</dbReference>
<dbReference type="PIRSF" id="PIRSF003817">
    <property type="entry name" value="Gen_Poly_FLV"/>
    <property type="match status" value="1"/>
</dbReference>
<dbReference type="SMART" id="SM00487">
    <property type="entry name" value="DEXDc"/>
    <property type="match status" value="1"/>
</dbReference>
<dbReference type="SMART" id="SM00490">
    <property type="entry name" value="HELICc"/>
    <property type="match status" value="1"/>
</dbReference>
<dbReference type="SUPFAM" id="SSF56672">
    <property type="entry name" value="DNA/RNA polymerases"/>
    <property type="match status" value="1"/>
</dbReference>
<dbReference type="SUPFAM" id="SSF81296">
    <property type="entry name" value="E set domains"/>
    <property type="match status" value="1"/>
</dbReference>
<dbReference type="SUPFAM" id="SSF101257">
    <property type="entry name" value="Flavivirus capsid protein C"/>
    <property type="match status" value="1"/>
</dbReference>
<dbReference type="SUPFAM" id="SSF52540">
    <property type="entry name" value="P-loop containing nucleoside triphosphate hydrolases"/>
    <property type="match status" value="2"/>
</dbReference>
<dbReference type="SUPFAM" id="SSF53335">
    <property type="entry name" value="S-adenosyl-L-methionine-dependent methyltransferases"/>
    <property type="match status" value="1"/>
</dbReference>
<dbReference type="SUPFAM" id="SSF50494">
    <property type="entry name" value="Trypsin-like serine proteases"/>
    <property type="match status" value="1"/>
</dbReference>
<dbReference type="SUPFAM" id="SSF56983">
    <property type="entry name" value="Viral glycoprotein, central and dimerisation domains"/>
    <property type="match status" value="1"/>
</dbReference>
<dbReference type="PROSITE" id="PS51527">
    <property type="entry name" value="FLAVIVIRUS_NS2B"/>
    <property type="match status" value="1"/>
</dbReference>
<dbReference type="PROSITE" id="PS51528">
    <property type="entry name" value="FLAVIVIRUS_NS3PRO"/>
    <property type="match status" value="1"/>
</dbReference>
<dbReference type="PROSITE" id="PS51192">
    <property type="entry name" value="HELICASE_ATP_BIND_1"/>
    <property type="match status" value="1"/>
</dbReference>
<dbReference type="PROSITE" id="PS51194">
    <property type="entry name" value="HELICASE_CTER"/>
    <property type="match status" value="1"/>
</dbReference>
<dbReference type="PROSITE" id="PS50507">
    <property type="entry name" value="RDRP_SSRNA_POS"/>
    <property type="match status" value="1"/>
</dbReference>
<dbReference type="PROSITE" id="PS51591">
    <property type="entry name" value="RNA_CAP01_NS5_MT"/>
    <property type="match status" value="1"/>
</dbReference>
<keyword id="KW-0002">3D-structure</keyword>
<keyword id="KW-0004">4Fe-4S</keyword>
<keyword id="KW-0007">Acetylation</keyword>
<keyword id="KW-1072">Activation of host autophagy by virus</keyword>
<keyword id="KW-0024">Alternative initiation</keyword>
<keyword id="KW-0067">ATP-binding</keyword>
<keyword id="KW-0167">Capsid protein</keyword>
<keyword id="KW-1165">Clathrin-mediated endocytosis of virus by host</keyword>
<keyword id="KW-0165">Cleavage on pair of basic residues</keyword>
<keyword id="KW-1015">Disulfide bond</keyword>
<keyword id="KW-1170">Fusion of virus membrane with host endosomal membrane</keyword>
<keyword id="KW-1168">Fusion of virus membrane with host membrane</keyword>
<keyword id="KW-0325">Glycoprotein</keyword>
<keyword id="KW-0342">GTP-binding</keyword>
<keyword id="KW-0347">Helicase</keyword>
<keyword id="KW-1035">Host cytoplasm</keyword>
<keyword id="KW-1038">Host endoplasmic reticulum</keyword>
<keyword id="KW-1043">Host membrane</keyword>
<keyword id="KW-1048">Host nucleus</keyword>
<keyword id="KW-0945">Host-virus interaction</keyword>
<keyword id="KW-0378">Hydrolase</keyword>
<keyword id="KW-1090">Inhibition of host innate immune response by virus</keyword>
<keyword id="KW-1114">Inhibition of host interferon signaling pathway by virus</keyword>
<keyword id="KW-1105">Inhibition of host STAT1 by virus</keyword>
<keyword id="KW-1106">Inhibition of host STAT2 by virus</keyword>
<keyword id="KW-1112">Inhibition of host TYK2 by virus</keyword>
<keyword id="KW-0922">Interferon antiviral system evasion</keyword>
<keyword id="KW-0408">Iron</keyword>
<keyword id="KW-0411">Iron-sulfur</keyword>
<keyword id="KW-1017">Isopeptide bond</keyword>
<keyword id="KW-0472">Membrane</keyword>
<keyword id="KW-0479">Metal-binding</keyword>
<keyword id="KW-0489">Methyltransferase</keyword>
<keyword id="KW-0506">mRNA capping</keyword>
<keyword id="KW-0507">mRNA processing</keyword>
<keyword id="KW-0547">Nucleotide-binding</keyword>
<keyword id="KW-0548">Nucleotidyltransferase</keyword>
<keyword id="KW-0597">Phosphoprotein</keyword>
<keyword id="KW-0645">Protease</keyword>
<keyword id="KW-0694">RNA-binding</keyword>
<keyword id="KW-0696">RNA-directed RNA polymerase</keyword>
<keyword id="KW-0949">S-adenosyl-L-methionine</keyword>
<keyword id="KW-0964">Secreted</keyword>
<keyword id="KW-0720">Serine protease</keyword>
<keyword id="KW-0941">Suppressor of RNA silencing</keyword>
<keyword id="KW-0804">Transcription</keyword>
<keyword id="KW-0805">Transcription regulation</keyword>
<keyword id="KW-0808">Transferase</keyword>
<keyword id="KW-0812">Transmembrane</keyword>
<keyword id="KW-1133">Transmembrane helix</keyword>
<keyword id="KW-0832">Ubl conjugation</keyword>
<keyword id="KW-1161">Viral attachment to host cell</keyword>
<keyword id="KW-0261">Viral envelope protein</keyword>
<keyword id="KW-0899">Viral immunoevasion</keyword>
<keyword id="KW-1162">Viral penetration into host cytoplasm</keyword>
<keyword id="KW-0693">Viral RNA replication</keyword>
<keyword id="KW-0946">Virion</keyword>
<keyword id="KW-1164">Virus endocytosis by host</keyword>
<keyword id="KW-1160">Virus entry into host cell</keyword>
<keyword id="KW-0862">Zinc</keyword>
<accession>A0A024B7W1</accession>
<organismHost>
    <name type="scientific">Aedes aegypti</name>
    <name type="common">Yellowfever mosquito</name>
    <name type="synonym">Culex aegypti</name>
    <dbReference type="NCBI Taxonomy" id="7159"/>
</organismHost>
<organismHost>
    <name type="scientific">Aedes albopictus</name>
    <name type="common">Asian tiger mosquito</name>
    <name type="synonym">Stegomyia albopicta</name>
    <dbReference type="NCBI Taxonomy" id="7160"/>
</organismHost>
<organismHost>
    <name type="scientific">Homo sapiens</name>
    <name type="common">Human</name>
    <dbReference type="NCBI Taxonomy" id="9606"/>
</organismHost>
<organismHost>
    <name type="scientific">Macaca mulatta</name>
    <name type="common">Rhesus macaque</name>
    <dbReference type="NCBI Taxonomy" id="9544"/>
</organismHost>
<evidence type="ECO:0000250" key="1">
    <source>
        <dbReference type="UniProtKB" id="A0A142I5B9"/>
    </source>
</evidence>
<evidence type="ECO:0000250" key="2">
    <source>
        <dbReference type="UniProtKB" id="P03314"/>
    </source>
</evidence>
<evidence type="ECO:0000250" key="3">
    <source>
        <dbReference type="UniProtKB" id="P06935"/>
    </source>
</evidence>
<evidence type="ECO:0000250" key="4">
    <source>
        <dbReference type="UniProtKB" id="P12823"/>
    </source>
</evidence>
<evidence type="ECO:0000250" key="5">
    <source>
        <dbReference type="UniProtKB" id="P14335"/>
    </source>
</evidence>
<evidence type="ECO:0000250" key="6">
    <source>
        <dbReference type="UniProtKB" id="P14336"/>
    </source>
</evidence>
<evidence type="ECO:0000250" key="7">
    <source>
        <dbReference type="UniProtKB" id="P14340"/>
    </source>
</evidence>
<evidence type="ECO:0000250" key="8">
    <source>
        <dbReference type="UniProtKB" id="P17763"/>
    </source>
</evidence>
<evidence type="ECO:0000250" key="9">
    <source>
        <dbReference type="UniProtKB" id="P29990"/>
    </source>
</evidence>
<evidence type="ECO:0000250" key="10">
    <source>
        <dbReference type="UniProtKB" id="Q32ZE1"/>
    </source>
</evidence>
<evidence type="ECO:0000250" key="11">
    <source>
        <dbReference type="UniProtKB" id="Q6YMS4"/>
    </source>
</evidence>
<evidence type="ECO:0000250" key="12">
    <source>
        <dbReference type="UniProtKB" id="Q9Q6P4"/>
    </source>
</evidence>
<evidence type="ECO:0000255" key="13"/>
<evidence type="ECO:0000255" key="14">
    <source>
        <dbReference type="PROSITE-ProRule" id="PRU00539"/>
    </source>
</evidence>
<evidence type="ECO:0000255" key="15">
    <source>
        <dbReference type="PROSITE-ProRule" id="PRU00541"/>
    </source>
</evidence>
<evidence type="ECO:0000255" key="16">
    <source>
        <dbReference type="PROSITE-ProRule" id="PRU00542"/>
    </source>
</evidence>
<evidence type="ECO:0000255" key="17">
    <source>
        <dbReference type="PROSITE-ProRule" id="PRU00859"/>
    </source>
</evidence>
<evidence type="ECO:0000255" key="18">
    <source>
        <dbReference type="PROSITE-ProRule" id="PRU00860"/>
    </source>
</evidence>
<evidence type="ECO:0000255" key="19">
    <source>
        <dbReference type="PROSITE-ProRule" id="PRU00924"/>
    </source>
</evidence>
<evidence type="ECO:0000269" key="20">
    <source>
    </source>
</evidence>
<evidence type="ECO:0000269" key="21">
    <source>
    </source>
</evidence>
<evidence type="ECO:0000269" key="22">
    <source>
    </source>
</evidence>
<evidence type="ECO:0000269" key="23">
    <source>
    </source>
</evidence>
<evidence type="ECO:0000269" key="24">
    <source>
    </source>
</evidence>
<evidence type="ECO:0000269" key="25">
    <source>
    </source>
</evidence>
<evidence type="ECO:0000269" key="26">
    <source>
    </source>
</evidence>
<evidence type="ECO:0000269" key="27">
    <source>
    </source>
</evidence>
<evidence type="ECO:0000269" key="28">
    <source>
    </source>
</evidence>
<evidence type="ECO:0000269" key="29">
    <source>
    </source>
</evidence>
<evidence type="ECO:0000269" key="30">
    <source>
    </source>
</evidence>
<evidence type="ECO:0000269" key="31">
    <source>
    </source>
</evidence>
<evidence type="ECO:0000269" key="32">
    <source>
    </source>
</evidence>
<evidence type="ECO:0000269" key="33">
    <source>
    </source>
</evidence>
<evidence type="ECO:0000269" key="34">
    <source>
    </source>
</evidence>
<evidence type="ECO:0000269" key="35">
    <source>
    </source>
</evidence>
<evidence type="ECO:0000269" key="36">
    <source>
    </source>
</evidence>
<evidence type="ECO:0000303" key="37">
    <source>
    </source>
</evidence>
<evidence type="ECO:0000305" key="38"/>
<evidence type="ECO:0007744" key="39">
    <source>
        <dbReference type="PDB" id="5GOZ"/>
    </source>
</evidence>
<evidence type="ECO:0007744" key="40">
    <source>
        <dbReference type="PDB" id="5GP1"/>
    </source>
</evidence>
<evidence type="ECO:0007744" key="41">
    <source>
        <dbReference type="PDB" id="5NJU"/>
    </source>
</evidence>
<evidence type="ECO:0007744" key="42">
    <source>
        <dbReference type="PDB" id="5NJV"/>
    </source>
</evidence>
<evidence type="ECO:0007744" key="43">
    <source>
        <dbReference type="PDB" id="6CO8"/>
    </source>
</evidence>
<evidence type="ECO:0007829" key="44">
    <source>
        <dbReference type="PDB" id="5GP1"/>
    </source>
</evidence>
<evidence type="ECO:0007829" key="45">
    <source>
        <dbReference type="PDB" id="5JMT"/>
    </source>
</evidence>
<evidence type="ECO:0007829" key="46">
    <source>
        <dbReference type="PDB" id="5KQR"/>
    </source>
</evidence>
<evidence type="ECO:0007829" key="47">
    <source>
        <dbReference type="PDB" id="5KVE"/>
    </source>
</evidence>
<evidence type="ECO:0007829" key="48">
    <source>
        <dbReference type="PDB" id="5LBS"/>
    </source>
</evidence>
<evidence type="ECO:0007829" key="49">
    <source>
        <dbReference type="PDB" id="5LBV"/>
    </source>
</evidence>
<evidence type="ECO:0007829" key="50">
    <source>
        <dbReference type="PDB" id="5LCV"/>
    </source>
</evidence>
<evidence type="ECO:0007829" key="51">
    <source>
        <dbReference type="PDB" id="5NJV"/>
    </source>
</evidence>
<evidence type="ECO:0007829" key="52">
    <source>
        <dbReference type="PDB" id="5Y6N"/>
    </source>
</evidence>
<evidence type="ECO:0007829" key="53">
    <source>
        <dbReference type="PDB" id="6CO8"/>
    </source>
</evidence>
<evidence type="ECO:0007829" key="54">
    <source>
        <dbReference type="PDB" id="6LD1"/>
    </source>
</evidence>
<evidence type="ECO:0007829" key="55">
    <source>
        <dbReference type="PDB" id="6LD2"/>
    </source>
</evidence>
<evidence type="ECO:0007829" key="56">
    <source>
        <dbReference type="PDB" id="6LD3"/>
    </source>
</evidence>
<evidence type="ECO:0007829" key="57">
    <source>
        <dbReference type="PDB" id="6PLK"/>
    </source>
</evidence>
<evidence type="ECO:0007829" key="58">
    <source>
        <dbReference type="PDB" id="6S0J"/>
    </source>
</evidence>
<evidence type="ECO:0007829" key="59">
    <source>
        <dbReference type="PDB" id="7A3N"/>
    </source>
</evidence>
<evidence type="ECO:0007829" key="60">
    <source>
        <dbReference type="PDB" id="7BSD"/>
    </source>
</evidence>
<evidence type="ECO:0007829" key="61">
    <source>
        <dbReference type="PDB" id="7M1V"/>
    </source>
</evidence>
<evidence type="ECO:0007829" key="62">
    <source>
        <dbReference type="PDB" id="7YW7"/>
    </source>
</evidence>
<evidence type="ECO:0007829" key="63">
    <source>
        <dbReference type="PDB" id="7YW8"/>
    </source>
</evidence>
<evidence type="ECO:0007829" key="64">
    <source>
        <dbReference type="PDB" id="8EE8"/>
    </source>
</evidence>
<evidence type="ECO:0007829" key="65">
    <source>
        <dbReference type="PDB" id="8EEE"/>
    </source>
</evidence>
<name>POLG_ZIKVF</name>
<comment type="function">
    <molecule>Capsid protein C</molecule>
    <text evidence="8 28">Plays a role in virus budding by binding to the cell membrane and gathering the viral RNA into a nucleocapsid that forms the core of the mature virus particle (By similarity). During virus entry, may induce genome penetration into the host cytoplasm after hemifusion induced by the surface proteins (By similarity). Can migrate to the cell nucleus where it modulates host functions (By similarity). Inhibits the integrated stress response (ISR) in the infected cell (PubMed:28592527).</text>
</comment>
<comment type="function">
    <molecule>Capsid protein C</molecule>
    <text evidence="2">Inhibits RNA silencing by interfering with host Dicer.</text>
</comment>
<comment type="function">
    <molecule>Peptide pr</molecule>
    <text evidence="8">Prevents premature fusion activity of envelope proteins in trans-Golgi by binding to envelope protein E at pH 6.0. After virion release in extracellular space, gets dissociated from E dimers.</text>
</comment>
<comment type="function">
    <molecule>Protein prM</molecule>
    <text evidence="8">Plays a role in host immune defense modulation and protection of envelope protein E during virion synthesis. PrM-E cleavage is inefficient, many virions are only partially matured and immature prM-E proteins could play a role in immune evasion. Contributes to fetal microcephaly in humans. Acts as a chaperone for envelope protein E during intracellular virion assembly by masking and inactivating envelope protein E fusion peptide. prM is the only viral peptide matured by host furin in the trans-Golgi network probably to avoid catastrophic activation of the viral fusion activity in acidic Golgi compartment prior to virion release.</text>
</comment>
<comment type="function">
    <molecule>Small envelope protein M</molecule>
    <text evidence="8">May play a role in virus budding. Exerts cytotoxic effects by activating a mitochondrial apoptotic pathway through M ectodomain. May display a viroporin activity.</text>
</comment>
<comment type="function">
    <molecule>Envelope protein E</molecule>
    <text evidence="1 8">Binds to host cell surface receptors and mediates fusion between viral and cellular membranes. Efficient virus attachment to cell is, at least in part, mediated by host HAVCR1 in a cell-type specific manner (By similarity). In addition, host NCAM1 can also be used as entry receptor (By similarity). Interaction with host HSPA5 plays an important role in the early stages of infection as well (By similarity). Envelope protein is synthesized in the endoplasmic reticulum and forms a heterodimer with protein prM. The heterodimer plays a role in virion budding in the ER, and the newly formed immature particle is covered with 60 spikes composed of heterodimers between precursor prM and envelope protein E. The virion is transported to the Golgi apparatus where the low pH causes the dissociation of PrM-E heterodimers and formation of E homodimers. PrM-E cleavage is inefficient, many virions are only partially matured and immature prM-E proteins could play a role in immune evasion (By similarity).</text>
</comment>
<comment type="function">
    <molecule>Non-structural protein 1</molecule>
    <text evidence="10">Plays a role in the inhibition of host RLR-induced interferon-beta activation by targeting TANK-binding kinase 1/TBK1. In addition, recruits the host deubiquitinase USP8 to cleave 'Lys-11'-linked polyubiquitin chains from caspase-1/CASP1 thus inhibiting its proteasomal degradation. In turn, stabilized CASP1 promotes cleavage of cGAS, which inhibits its ability to recognize mitochondrial DNA release and initiate type I interferon signaling.</text>
</comment>
<comment type="function">
    <molecule>Non-structural protein 2A</molecule>
    <text evidence="1 10">Component of the viral RNA replication complex that recruits genomic RNA, the structural protein prM/E complex, and the NS2B/NS3 protease complex to the virion assembly site and orchestrates virus morphogenesis (By similarity). Antagonizes also the host MDA5-mediated induction of alpha/beta interferon antiviral response (By similarity). May disrupt adherens junction formation and thereby impair proliferation of radial cells in the host cortex (By similarity).</text>
</comment>
<comment type="function">
    <molecule>Serine protease subunit NS2B</molecule>
    <text evidence="10">Required cofactor for the serine protease function of NS3.</text>
</comment>
<comment type="function">
    <molecule>Serine protease NS3</molecule>
    <text evidence="10 28 33">Displays three enzymatic activities: serine protease, NTPase and RNA helicase. NS3 serine protease, in association with NS2B, performs its autocleavage and cleaves the polyprotein at dibasic sites in the cytoplasm: C-prM, NS2A-NS2B, NS2B-NS3, NS3-NS4A, NS4A-2K and NS4B-NS5. NS3 RNA helicase binds RNA and unwinds dsRNA in the 3' to 5' direction (By similarity). Inhibits the integrated stress response (ISR) in the infected cell by blocking stress granules assembly (PubMed:28592527). Disrupts host centrosome organization in a CEP63-dependent manner to degrade host TBK1 and inhibits innate immune response (PubMed:35793002).</text>
</comment>
<comment type="function">
    <molecule>Non-structural protein 4A</molecule>
    <text evidence="10 12 23 28 30">Regulates the ATPase activity of the NS3 helicase activity (By similarity). NS4A allows NS3 helicase to conserve energy during unwinding (By similarity). Cooperatively with NS4B suppresses the Akt-mTOR pathway and leads to cellular dysregulation (PubMed:27524440). By inhibiting host ANKLE2 functions, may cause defects in brain development, such as microcephaly (PubMed:30550790). Also antagonizes the host MDA5-mediated induction of alpha/beta interferon antiviral response (By similarity). Inhibits the integrated stress response (ISR) in the infected cell by blocking stress granules assembly (PubMed:28592527).</text>
</comment>
<comment type="function">
    <molecule>Peptide 2k</molecule>
    <text evidence="8">Functions as a signal peptide for NS4B and is required for the interferon antagonism activity of the latter.</text>
</comment>
<comment type="function">
    <molecule>Non-structural protein 4B</molecule>
    <text evidence="10 12 23">Induces the formation of ER-derived membrane vesicles where the viral replication takes place (By similarity). Also plays a role in the inhibition of host RLR-induced interferon-beta production at TANK-binding kinase 1/TBK1 level (By similarity). Cooperatively with NS4A suppresses the Akt-mTOR pathway and leads to cellular dysregulation (PubMed:27524440).</text>
</comment>
<comment type="function">
    <molecule>RNA-directed RNA polymerase NS5</molecule>
    <text evidence="10 30 31 32">Replicates the viral (+) and (-) RNA genome, and performs the capping of genomes in the cytoplasm (PubMed:30951555). Methylates viral RNA cap at guanine N-7 and ribose 2'-O positions. Once sufficient NS5 is expressed, binds to the cap-proximal structure and inhibits further translation of the viral genome (By similarity). Besides its role in RNA genome replication, also prevents the establishment of a cellular antiviral state by blocking the interferon-alpha/beta (IFN-alpha/beta) signaling pathway. Mechanistically, interferes with host kinases TBK1 and IKKE upstream of interferon regulatory factor 3/IRF3 to inhibit the RIG-I pathway (By similarity). Also antagonizes type I interferon signaling by targeting STAT2 for degradation by the proteasome thereby preventing activation of JAK-STAT signaling pathway (By similarity). Mechanistically, acts as a scaffold protein to connect host ZSWIM8/CUL3 ligase complex and STAT2, leading to STAT2 degradation. Within the host nucleus, disrupts host SUMO1 and STAT2 co-localization with PML, resulting in PML degradation (PubMed:32699085). May also reduce immune responses by preventing the recruitment of the host PAF1 complex to interferon-responsive genes (PubMed:30550790).</text>
</comment>
<comment type="catalytic activity">
    <molecule>RNA-directed RNA polymerase NS5</molecule>
    <reaction evidence="19">
        <text>a 5'-end (5'-triphosphoguanosine)-ribonucleoside in mRNA + S-adenosyl-L-methionine = a 5'-end (N(7)-methyl 5'-triphosphoguanosine)-ribonucleoside in mRNA + S-adenosyl-L-homocysteine</text>
        <dbReference type="Rhea" id="RHEA:67008"/>
        <dbReference type="Rhea" id="RHEA-COMP:17166"/>
        <dbReference type="Rhea" id="RHEA-COMP:17167"/>
        <dbReference type="ChEBI" id="CHEBI:57856"/>
        <dbReference type="ChEBI" id="CHEBI:59789"/>
        <dbReference type="ChEBI" id="CHEBI:156461"/>
        <dbReference type="ChEBI" id="CHEBI:167617"/>
        <dbReference type="EC" id="2.1.1.56"/>
    </reaction>
</comment>
<comment type="catalytic activity">
    <molecule>RNA-directed RNA polymerase NS5</molecule>
    <reaction evidence="19">
        <text>a 5'-end (N(7)-methyl 5'-triphosphoguanosine)-ribonucleoside in mRNA + S-adenosyl-L-methionine = a 5'-end (N(7)-methyl 5'-triphosphoguanosine)-(2'-O-methyl-ribonucleoside) in mRNA + S-adenosyl-L-homocysteine + H(+)</text>
        <dbReference type="Rhea" id="RHEA:67020"/>
        <dbReference type="Rhea" id="RHEA-COMP:17167"/>
        <dbReference type="Rhea" id="RHEA-COMP:17168"/>
        <dbReference type="ChEBI" id="CHEBI:15378"/>
        <dbReference type="ChEBI" id="CHEBI:57856"/>
        <dbReference type="ChEBI" id="CHEBI:59789"/>
        <dbReference type="ChEBI" id="CHEBI:156461"/>
        <dbReference type="ChEBI" id="CHEBI:167609"/>
        <dbReference type="EC" id="2.1.1.57"/>
    </reaction>
</comment>
<comment type="catalytic activity">
    <reaction evidence="14 31">
        <text>RNA(n) + a ribonucleoside 5'-triphosphate = RNA(n+1) + diphosphate</text>
        <dbReference type="Rhea" id="RHEA:21248"/>
        <dbReference type="Rhea" id="RHEA-COMP:14527"/>
        <dbReference type="Rhea" id="RHEA-COMP:17342"/>
        <dbReference type="ChEBI" id="CHEBI:33019"/>
        <dbReference type="ChEBI" id="CHEBI:61557"/>
        <dbReference type="ChEBI" id="CHEBI:140395"/>
        <dbReference type="EC" id="2.7.7.48"/>
    </reaction>
</comment>
<comment type="catalytic activity">
    <reaction evidence="10">
        <text>Selective hydrolysis of -Xaa-Xaa-|-Yaa- bonds in which each of the Xaa can be either Arg or Lys and Yaa can be either Ser or Ala.</text>
        <dbReference type="EC" id="3.4.21.91"/>
    </reaction>
</comment>
<comment type="catalytic activity">
    <reaction evidence="10">
        <text>a ribonucleoside 5'-triphosphate + H2O = a ribonucleoside 5'-diphosphate + phosphate + H(+)</text>
        <dbReference type="Rhea" id="RHEA:23680"/>
        <dbReference type="ChEBI" id="CHEBI:15377"/>
        <dbReference type="ChEBI" id="CHEBI:15378"/>
        <dbReference type="ChEBI" id="CHEBI:43474"/>
        <dbReference type="ChEBI" id="CHEBI:57930"/>
        <dbReference type="ChEBI" id="CHEBI:61557"/>
        <dbReference type="EC" id="3.6.1.15"/>
    </reaction>
</comment>
<comment type="catalytic activity">
    <reaction evidence="12">
        <text>ATP + H2O = ADP + phosphate + H(+)</text>
        <dbReference type="Rhea" id="RHEA:13065"/>
        <dbReference type="ChEBI" id="CHEBI:15377"/>
        <dbReference type="ChEBI" id="CHEBI:15378"/>
        <dbReference type="ChEBI" id="CHEBI:30616"/>
        <dbReference type="ChEBI" id="CHEBI:43474"/>
        <dbReference type="ChEBI" id="CHEBI:456216"/>
        <dbReference type="EC" id="3.6.4.13"/>
    </reaction>
</comment>
<comment type="subunit">
    <molecule>Capsid protein C</molecule>
    <text evidence="8 28 35">Homodimer (By similarity). Interacts with host SERTAD3; this interaction promotes capsid protein C degradation (PubMed:36594413). Interacts with host CAPRIN1; this interaction is probably linked to the inhibition of stress granules formation by the virus (PubMed:28592527). Interacts with host G3BP1; this interaction is probably linked to the inhibition of stress granules formation by the virus (PubMed:28592527).</text>
</comment>
<comment type="subunit">
    <molecule>Protein prM</molecule>
    <text evidence="1 8">Forms heterodimers with envelope protein E in the endoplasmic reticulum and Golgi (By similarity). Interacts with non-structural protein 2A (By similarity).</text>
</comment>
<comment type="subunit">
    <molecule>Envelope protein E</molecule>
    <text evidence="1 8 10 20">Homodimer; in the endoplasmic reticulum and Golgi (By similarity). Interacts with host TYRO3, AXL and DC-SIGN proteins (PubMed:26085147). Interacts with non-structural protein 2A (By similarity). Interacts with host HAVCR1; this interaction likely mediates virus attachment to host cell (By similarity). Interacts with host NCAM1 (By similarity). Interacts with host HSPA5 (By similarity). Interacts with Aedes aegypti SRPN25, APY and venom allergen-1 salivary proteins; the interactions do not affect Zika virus replication in human endothelial cells and keratinocytes (By similarity).</text>
</comment>
<comment type="subunit">
    <molecule>Non-structural protein 1</molecule>
    <text evidence="8 10">Homodimer; Homohexamer when secreted (By similarity). Interacts with host TBK1 (By similarity). Interacts with host USP8 (By similarity). Interacts with envelope protein E (By similarity).</text>
</comment>
<comment type="subunit">
    <molecule>Non-structural protein 2A</molecule>
    <text evidence="1">Interacts with the structural protein prM/E complex, and the NS2B/NS3 protease complex.</text>
</comment>
<comment type="subunit">
    <molecule>Serine protease subunit NS2B</molecule>
    <text evidence="1 8 10">Forms a heterodimer with serine protease NS3 (By similarity). May form homooligomers (By similarity). Interacts with human SPCS1 (By similarity). Interacts with non-structural protein 2A (By similarity).</text>
</comment>
<comment type="subunit">
    <molecule>Serine protease NS3</molecule>
    <text evidence="1 8 10 35">Forms a heterodimer with NS2B (By similarity). Interacts with NS4B (By similarity). Interacts with unphosphorylated RNA-directed RNA polymerase NS5; this interaction stimulates RNA-directed RNA polymerase NS5 guanylyltransferase activity (By similarity). Interacts with non-structural protein 2A (By similarity). Interacts with host SHFL; this interaction promotes NS3 degradation via a lysosome-dependent pathway (By similarity). Interacts with host CEP63; this interaction disorganizes the centrosome and inhibits host innate immune response (PubMed:36594413).</text>
</comment>
<comment type="subunit">
    <molecule>Non-structural protein 4A</molecule>
    <text evidence="30">May interact with host ANKLE2; the interaction may cause defects in brain development, such as microcephaly (PubMed:30550790). May interact with host SRPRA and SEC61G (PubMed:30550790).</text>
</comment>
<comment type="subunit">
    <molecule>Non-structural protein 4B</molecule>
    <text evidence="8">Interacts with serine protease NS3. Interacts with NS1 (By similarity).</text>
</comment>
<comment type="subunit">
    <molecule>RNA-directed RNA polymerase NS5</molecule>
    <text evidence="8 10 30 31 32">Homodimer; dimerization may negatively regulate the GTase activity, a crucial step in the capping process (PubMed:30951555). Interacts with host STAT2; this interaction inhibits the phosphorylation of the latter, and, when all viral proteins are present (polyprotein), targets STAT2 for degradation (PubMed:30550790, PubMed:32699085). Interacts with host TBK1 and IKBKE; these interactions lead to the inhibition of the host RIG-I signaling pathway (By similarity). Interacts with host PAF1 complex; the interaction may prevent the recruitment of the host PAF1 complex to interferon-responsive genes, and thus reduces the immune response (PubMed:30550790). Interacts with serine protease NS3 (By similarity). Interacts with host KPNA2 (By similarity). Interacts with host ZSWIM8; this interaction allows STAT2 binding to ZSWIM8 and subsequent proteasomal degradation leading to inhibition of interferon signaling (By similarity).</text>
</comment>
<comment type="subcellular location">
    <molecule>Capsid protein C</molecule>
    <subcellularLocation>
        <location evidence="8">Virion</location>
    </subcellularLocation>
    <subcellularLocation>
        <location evidence="35">Host nucleus</location>
    </subcellularLocation>
    <subcellularLocation>
        <location evidence="3">Host cytoplasm</location>
    </subcellularLocation>
    <subcellularLocation>
        <location evidence="3">Host cytoplasm</location>
        <location evidence="3">Host perinuclear region</location>
    </subcellularLocation>
</comment>
<comment type="subcellular location">
    <molecule>Peptide pr</molecule>
    <subcellularLocation>
        <location evidence="8">Secreted</location>
    </subcellularLocation>
</comment>
<comment type="subcellular location">
    <molecule>Small envelope protein M</molecule>
    <subcellularLocation>
        <location evidence="8">Virion membrane</location>
        <topology evidence="13">Multi-pass membrane protein</topology>
    </subcellularLocation>
    <subcellularLocation>
        <location evidence="8">Host endoplasmic reticulum membrane</location>
        <topology evidence="13">Multi-pass membrane protein</topology>
    </subcellularLocation>
</comment>
<comment type="subcellular location">
    <molecule>Envelope protein E</molecule>
    <subcellularLocation>
        <location evidence="8">Virion membrane</location>
        <topology evidence="13">Multi-pass membrane protein</topology>
    </subcellularLocation>
    <subcellularLocation>
        <location evidence="8">Host endoplasmic reticulum membrane</location>
        <topology evidence="13">Multi-pass membrane protein</topology>
    </subcellularLocation>
</comment>
<comment type="subcellular location">
    <molecule>Non-structural protein 1</molecule>
    <subcellularLocation>
        <location evidence="8">Secreted</location>
    </subcellularLocation>
    <subcellularLocation>
        <location evidence="10">Host endoplasmic reticulum membrane</location>
        <topology evidence="10">Peripheral membrane protein</topology>
        <orientation evidence="8">Lumenal side</orientation>
    </subcellularLocation>
    <text evidence="12">Located in RE-derived vesicles hosting the replication complex.</text>
</comment>
<comment type="subcellular location">
    <molecule>Non-structural protein 2A</molecule>
    <subcellularLocation>
        <location evidence="8">Host endoplasmic reticulum membrane</location>
        <topology evidence="8">Multi-pass membrane protein</topology>
    </subcellularLocation>
</comment>
<comment type="subcellular location">
    <molecule>Serine protease NS3</molecule>
    <subcellularLocation>
        <location evidence="18">Host endoplasmic reticulum membrane</location>
        <topology evidence="18">Peripheral membrane protein</topology>
        <orientation evidence="18">Cytoplasmic side</orientation>
    </subcellularLocation>
    <text evidence="18">Remains non-covalently associated to serine protease subunit NS2B.</text>
</comment>
<comment type="subcellular location">
    <molecule>Non-structural protein 4A</molecule>
    <subcellularLocation>
        <location evidence="8">Host endoplasmic reticulum membrane</location>
        <topology evidence="8">Multi-pass membrane protein</topology>
    </subcellularLocation>
    <text evidence="8">Located in RE-associated vesicles hosting the replication complex.</text>
</comment>
<comment type="subcellular location">
    <molecule>Non-structural protein 4B</molecule>
    <subcellularLocation>
        <location evidence="8">Host endoplasmic reticulum membrane</location>
        <topology evidence="8">Multi-pass membrane protein</topology>
    </subcellularLocation>
    <text evidence="12">Located in RE-derived vesicles hosting the replication complex.</text>
</comment>
<comment type="subcellular location">
    <molecule>RNA-directed RNA polymerase NS5</molecule>
    <subcellularLocation>
        <location evidence="10">Host endoplasmic reticulum membrane</location>
        <topology evidence="10">Peripheral membrane protein</topology>
        <orientation evidence="10">Cytoplasmic side</orientation>
    </subcellularLocation>
    <subcellularLocation>
        <location evidence="32">Host nucleus</location>
    </subcellularLocation>
    <text evidence="8">Located in RE-associated vesicles hosting the replication complex. NS5 protein is mainly localized in the nucleus rather than in ER vesicles.</text>
</comment>
<comment type="alternative products">
    <event type="alternative initiation"/>
    <isoform>
        <id>A0A024B7W1-1</id>
        <name>Genome polyprotein</name>
        <sequence type="displayed"/>
    </isoform>
    <isoform>
        <id>P0DXO2-1</id>
        <name evidence="36">uORF1 protein</name>
        <sequence type="external"/>
    </isoform>
    <isoform>
        <id>P0DXO0-1</id>
        <name evidence="36">uORF2 protein</name>
        <sequence type="external"/>
    </isoform>
</comment>
<comment type="domain">
    <molecule>Small envelope protein M</molecule>
    <text evidence="8">The transmembrane domain contains an endoplasmic reticulum retention signal.</text>
</comment>
<comment type="domain">
    <molecule>Envelope protein E</molecule>
    <text evidence="8">The transmembrane domain contains an endoplasmic reticulum retention signal.</text>
</comment>
<comment type="domain">
    <molecule>Capsid protein C</molecule>
    <text evidence="4">The disordered region at the N-terminus may be involved in lipid-droplet binding.</text>
</comment>
<comment type="domain">
    <molecule>Serine protease subunit NS2B</molecule>
    <text evidence="10">The central disordered region transitions to ordered by binding to NS3.</text>
</comment>
<comment type="domain">
    <molecule>RNA-directed RNA polymerase NS5</molecule>
    <text evidence="10">Comprises a methyltransferase (MTase) in the N-terminal region and an RNA-dependent RNA polymerase in the C-terminal region.</text>
</comment>
<comment type="PTM">
    <molecule>Genome polyprotein</molecule>
    <text evidence="8">Specific enzymatic cleavages in vivo yield mature proteins. Cleavages in the lumen of endoplasmic reticulum are performed by host signal peptidase, whereas cleavages in the cytoplasmic side are performed by serine protease NS3. Signal cleavage at the 2K-4B site requires a prior NS3 protease-mediated cleavage at the 4A-2K site.</text>
</comment>
<comment type="PTM">
    <molecule>Protein prM</molecule>
    <text evidence="8">Cleaved in post-Golgi vesicles by a host furin, releasing the mature small envelope protein M, and peptide pr. This cleavage is incomplete as up to 30% of viral particles still carry uncleaved prM.</text>
</comment>
<comment type="PTM">
    <molecule>Envelope protein E</molecule>
    <text evidence="29">N-glycosylation plays a role in virulence in mammalian and mosquito hosts, but may have no effect on neurovirulence.</text>
</comment>
<comment type="PTM">
    <molecule>Envelope protein E</molecule>
    <text evidence="1">Ubiquitination by host TRIM7 promotes virus attachment and fusion of the virus and the host endosome membrane.</text>
</comment>
<comment type="PTM">
    <molecule>Non-structural protein 1</molecule>
    <text evidence="8">N-glycosylated. The excreted form is glycosylated, which is required for efficient secretion of the protein from infected cells.</text>
</comment>
<comment type="PTM">
    <molecule>Non-structural protein 1</molecule>
    <text evidence="34">Ubiquitination by host TRIM22 leads to proteasomal degradation.</text>
</comment>
<comment type="PTM">
    <molecule>Serine protease NS3</molecule>
    <text evidence="34">Ubiquitination by host TRIM22 leads to proteasomal degradation.</text>
</comment>
<comment type="PTM">
    <molecule>Serine protease NS3</molecule>
    <text evidence="10">Acetylated by host KAT5. Acetylation modulates NS3 RNA-binding and unwinding activities and plays an important positive role for viral replication.</text>
</comment>
<comment type="PTM">
    <molecule>RNA-directed RNA polymerase NS5</molecule>
    <text evidence="8">Phosphorylated on serines residues. This phosphorylation may trigger NS5 nuclear localization.</text>
</comment>
<comment type="PTM">
    <molecule>RNA-directed RNA polymerase NS5</molecule>
    <text evidence="32">Sumoylated, required for regulating IFN induced interferon stimulated genes/ISGs.</text>
</comment>
<comment type="similarity">
    <text evidence="19">In the N-terminal section; belongs to the class I-like SAM-binding methyltransferase superfamily. mRNA cap 0-1 NS5-type methyltransferase family.</text>
</comment>
<comment type="online information" name="Protein Spotlight">
    <link uri="https://www.proteinspotlight.org/back_issues/200/"/>
    <text>Side effects - Issue 200 of February 2018</text>
</comment>
<proteinExistence type="evidence at protein level"/>